<feature type="chain" id="PRO_0000405214" description="Genome polyprotein">
    <location>
        <begin position="1"/>
        <end position="3391"/>
    </location>
</feature>
<feature type="chain" id="PRO_0000037936" description="Capsid protein C" evidence="6">
    <location>
        <begin position="1"/>
        <end position="100"/>
    </location>
</feature>
<feature type="propeptide" id="PRO_0000037937" description="ER anchor for the Capsid protein C, removed in mature form by serine protease NS3" evidence="6">
    <location>
        <begin position="101"/>
        <end position="114"/>
    </location>
</feature>
<feature type="propeptide" id="PRO_0000441419" description="ER anchor for the capsid protein C, removed in mature form by serine protease NS3" evidence="6">
    <location>
        <begin position="101"/>
        <end position="114"/>
    </location>
</feature>
<feature type="chain" id="PRO_0000308279" description="Protein prM" evidence="6">
    <location>
        <begin position="115"/>
        <end position="280"/>
    </location>
</feature>
<feature type="chain" id="PRO_0000308280" description="Peptide pr" evidence="6">
    <location>
        <begin position="115"/>
        <end position="205"/>
    </location>
</feature>
<feature type="chain" id="PRO_0000037938" description="Small envelope protein M" evidence="6">
    <location>
        <begin position="206"/>
        <end position="280"/>
    </location>
</feature>
<feature type="chain" id="PRO_0000037939" description="Envelope protein E" evidence="6">
    <location>
        <begin position="281"/>
        <end position="775"/>
    </location>
</feature>
<feature type="chain" id="PRO_0000037940" description="Non-structural protein 1" evidence="6">
    <location>
        <begin position="776"/>
        <end position="1127"/>
    </location>
</feature>
<feature type="chain" id="PRO_0000037941" description="Non-structural protein 2A" evidence="6">
    <location>
        <begin position="1128"/>
        <end position="1345"/>
    </location>
</feature>
<feature type="chain" id="PRO_0000037943" description="Serine protease subunit NS2B" evidence="6">
    <location>
        <begin position="1346"/>
        <end position="1475"/>
    </location>
</feature>
<feature type="chain" id="PRO_0000308465" description="Serine protease NS3" evidence="6">
    <location>
        <begin position="1476"/>
        <end position="2093"/>
    </location>
</feature>
<feature type="chain" id="PRO_0000037944" description="Non-structural protein 4A" evidence="6">
    <location>
        <begin position="2094"/>
        <end position="2220"/>
    </location>
</feature>
<feature type="peptide" id="PRO_0000308281" description="Peptide 2k" evidence="6">
    <location>
        <begin position="2221"/>
        <end position="2243"/>
    </location>
</feature>
<feature type="chain" id="PRO_0000037945" description="Non-structural protein 4B" evidence="6">
    <location>
        <begin position="2244"/>
        <end position="2491"/>
    </location>
</feature>
<feature type="chain" id="PRO_0000037946" description="RNA-directed RNA polymerase NS5" evidence="6">
    <location>
        <begin position="2492"/>
        <end position="3391"/>
    </location>
</feature>
<feature type="topological domain" description="Cytoplasmic" evidence="10">
    <location>
        <begin position="1"/>
        <end position="101"/>
    </location>
</feature>
<feature type="transmembrane region" description="Helical" evidence="10">
    <location>
        <begin position="102"/>
        <end position="122"/>
    </location>
</feature>
<feature type="topological domain" description="Extracellular" evidence="10">
    <location>
        <begin position="123"/>
        <end position="242"/>
    </location>
</feature>
<feature type="transmembrane region" description="Helical" evidence="10">
    <location>
        <begin position="243"/>
        <end position="260"/>
    </location>
</feature>
<feature type="topological domain" description="Cytoplasmic" evidence="10">
    <location>
        <position position="261"/>
    </location>
</feature>
<feature type="transmembrane region" description="Helical" evidence="10">
    <location>
        <begin position="262"/>
        <end position="280"/>
    </location>
</feature>
<feature type="topological domain" description="Extracellular" evidence="10">
    <location>
        <begin position="281"/>
        <end position="727"/>
    </location>
</feature>
<feature type="transmembrane region" description="Helical" evidence="10">
    <location>
        <begin position="728"/>
        <end position="748"/>
    </location>
</feature>
<feature type="topological domain" description="Cytoplasmic" evidence="10">
    <location>
        <begin position="749"/>
        <end position="752"/>
    </location>
</feature>
<feature type="transmembrane region" description="Helical" evidence="10">
    <location>
        <begin position="753"/>
        <end position="773"/>
    </location>
</feature>
<feature type="topological domain" description="Extracellular" evidence="10">
    <location>
        <begin position="774"/>
        <end position="1195"/>
    </location>
</feature>
<feature type="transmembrane region" description="Helical" evidence="10">
    <location>
        <begin position="1196"/>
        <end position="1220"/>
    </location>
</feature>
<feature type="topological domain" description="Cytoplasmic" evidence="10">
    <location>
        <begin position="1221"/>
        <end position="1226"/>
    </location>
</feature>
<feature type="transmembrane region" description="Helical" evidence="10">
    <location>
        <begin position="1227"/>
        <end position="1245"/>
    </location>
</feature>
<feature type="topological domain" description="Lumenal" evidence="10">
    <location>
        <begin position="1246"/>
        <end position="1269"/>
    </location>
</feature>
<feature type="transmembrane region" description="Helical" evidence="10">
    <location>
        <begin position="1270"/>
        <end position="1290"/>
    </location>
</feature>
<feature type="topological domain" description="Cytoplasmic" evidence="10">
    <location>
        <position position="1291"/>
    </location>
</feature>
<feature type="transmembrane region" description="Helical" evidence="10">
    <location>
        <begin position="1292"/>
        <end position="1310"/>
    </location>
</feature>
<feature type="topological domain" description="Lumenal" evidence="10">
    <location>
        <begin position="1311"/>
        <end position="1317"/>
    </location>
</feature>
<feature type="transmembrane region" description="Helical" evidence="10">
    <location>
        <begin position="1318"/>
        <end position="1338"/>
    </location>
</feature>
<feature type="topological domain" description="Cytoplasmic" evidence="10">
    <location>
        <begin position="1339"/>
        <end position="1346"/>
    </location>
</feature>
<feature type="transmembrane region" description="Helical" evidence="10">
    <location>
        <begin position="1347"/>
        <end position="1367"/>
    </location>
</feature>
<feature type="topological domain" description="Lumenal" evidence="10">
    <location>
        <begin position="1368"/>
        <end position="1370"/>
    </location>
</feature>
<feature type="transmembrane region" description="Helical" evidence="10">
    <location>
        <begin position="1371"/>
        <end position="1391"/>
    </location>
</feature>
<feature type="topological domain" description="Cytoplasmic" evidence="10">
    <location>
        <begin position="1392"/>
        <end position="1447"/>
    </location>
</feature>
<feature type="intramembrane region" description="Helical" evidence="10">
    <location>
        <begin position="1448"/>
        <end position="1468"/>
    </location>
</feature>
<feature type="topological domain" description="Cytoplasmic" evidence="10">
    <location>
        <begin position="1469"/>
        <end position="2147"/>
    </location>
</feature>
<feature type="transmembrane region" description="Helical" evidence="10">
    <location>
        <begin position="2148"/>
        <end position="2168"/>
    </location>
</feature>
<feature type="topological domain" description="Lumenal" evidence="10">
    <location>
        <begin position="2169"/>
        <end position="2170"/>
    </location>
</feature>
<feature type="intramembrane region" description="Helical" evidence="10">
    <location>
        <begin position="2171"/>
        <end position="2191"/>
    </location>
</feature>
<feature type="topological domain" description="Lumenal" evidence="10">
    <location>
        <position position="2192"/>
    </location>
</feature>
<feature type="transmembrane region" description="Helical" evidence="10">
    <location>
        <begin position="2193"/>
        <end position="2213"/>
    </location>
</feature>
<feature type="topological domain" description="Cytoplasmic" evidence="10">
    <location>
        <begin position="2214"/>
        <end position="2228"/>
    </location>
</feature>
<feature type="transmembrane region" description="Helical; Note=Signal for NS4B" evidence="10">
    <location>
        <begin position="2229"/>
        <end position="2249"/>
    </location>
</feature>
<feature type="topological domain" description="Lumenal" evidence="10">
    <location>
        <begin position="2250"/>
        <end position="2274"/>
    </location>
</feature>
<feature type="intramembrane region" description="Helical" evidence="10">
    <location>
        <begin position="2275"/>
        <end position="2295"/>
    </location>
</feature>
<feature type="topological domain" description="Lumenal" evidence="10">
    <location>
        <begin position="2296"/>
        <end position="2316"/>
    </location>
</feature>
<feature type="intramembrane region" description="Helical" evidence="10">
    <location>
        <begin position="2317"/>
        <end position="2337"/>
    </location>
</feature>
<feature type="topological domain" description="Lumenal" evidence="10">
    <location>
        <begin position="2338"/>
        <end position="2347"/>
    </location>
</feature>
<feature type="transmembrane region" description="Helical" evidence="10">
    <location>
        <begin position="2348"/>
        <end position="2368"/>
    </location>
</feature>
<feature type="topological domain" description="Cytoplasmic" evidence="10">
    <location>
        <begin position="2369"/>
        <end position="2413"/>
    </location>
</feature>
<feature type="transmembrane region" description="Helical" evidence="10">
    <location>
        <begin position="2414"/>
        <end position="2434"/>
    </location>
</feature>
<feature type="topological domain" description="Lumenal" evidence="10">
    <location>
        <begin position="2435"/>
        <end position="2459"/>
    </location>
</feature>
<feature type="transmembrane region" description="Helical" evidence="10">
    <location>
        <begin position="2460"/>
        <end position="2480"/>
    </location>
</feature>
<feature type="topological domain" description="Cytoplasmic" evidence="10">
    <location>
        <begin position="2481"/>
        <end position="3391"/>
    </location>
</feature>
<feature type="domain" description="Peptidase S7" evidence="15">
    <location>
        <begin position="1476"/>
        <end position="1653"/>
    </location>
</feature>
<feature type="domain" description="Helicase ATP-binding" evidence="13">
    <location>
        <begin position="1655"/>
        <end position="1811"/>
    </location>
</feature>
<feature type="domain" description="Helicase C-terminal">
    <location>
        <begin position="1821"/>
        <end position="1988"/>
    </location>
</feature>
<feature type="domain" description="mRNA cap 0-1 NS5-type MT" evidence="16">
    <location>
        <begin position="2493"/>
        <end position="2755"/>
    </location>
</feature>
<feature type="domain" description="RdRp catalytic" evidence="12">
    <location>
        <begin position="3020"/>
        <end position="3169"/>
    </location>
</feature>
<feature type="region of interest" description="Interaction with host EXOC1" evidence="5">
    <location>
        <begin position="1"/>
        <end position="15"/>
    </location>
</feature>
<feature type="region of interest" description="Hydrophobic; homodimerization of capsid protein C" evidence="6">
    <location>
        <begin position="37"/>
        <end position="72"/>
    </location>
</feature>
<feature type="region of interest" description="Fusion peptide" evidence="3">
    <location>
        <begin position="378"/>
        <end position="391"/>
    </location>
</feature>
<feature type="region of interest" description="Interacts with and activates NS3 protease" evidence="14">
    <location>
        <begin position="1398"/>
        <end position="1437"/>
    </location>
</feature>
<feature type="region of interest" description="Important for RNA-binding" evidence="4">
    <location>
        <begin position="1659"/>
        <end position="1662"/>
    </location>
</feature>
<feature type="short sequence motif" description="DEAH box" evidence="13">
    <location>
        <begin position="1759"/>
        <end position="1762"/>
    </location>
</feature>
<feature type="short sequence motif" description="SUMO-interacting motif" evidence="6">
    <location>
        <begin position="2568"/>
        <end position="2571"/>
    </location>
</feature>
<feature type="active site" description="Charge relay system; for serine protease NS3 activity" evidence="15">
    <location>
        <position position="1526"/>
    </location>
</feature>
<feature type="active site" description="Charge relay system; for serine protease NS3 activity" evidence="15">
    <location>
        <position position="1550"/>
    </location>
</feature>
<feature type="active site" description="Charge relay system; for serine protease NS3 activity" evidence="15">
    <location>
        <position position="1610"/>
    </location>
</feature>
<feature type="active site" description="For 2'-O-MTase activity" evidence="8">
    <location>
        <position position="2552"/>
    </location>
</feature>
<feature type="active site" description="For 2'-O-MTase activity" evidence="8">
    <location>
        <position position="2637"/>
    </location>
</feature>
<feature type="active site" description="For 2'-O-MTase activity" evidence="8">
    <location>
        <position position="2672"/>
    </location>
</feature>
<feature type="active site" description="For 2'-O-MTase activity" evidence="8">
    <location>
        <position position="2708"/>
    </location>
</feature>
<feature type="binding site" evidence="13">
    <location>
        <begin position="1668"/>
        <end position="1675"/>
    </location>
    <ligand>
        <name>ATP</name>
        <dbReference type="ChEBI" id="CHEBI:30616"/>
    </ligand>
</feature>
<feature type="binding site" evidence="16">
    <location>
        <position position="2547"/>
    </location>
    <ligand>
        <name>S-adenosyl-L-methionine</name>
        <dbReference type="ChEBI" id="CHEBI:59789"/>
    </ligand>
</feature>
<feature type="binding site" evidence="16">
    <location>
        <position position="2577"/>
    </location>
    <ligand>
        <name>S-adenosyl-L-methionine</name>
        <dbReference type="ChEBI" id="CHEBI:59789"/>
    </ligand>
</feature>
<feature type="binding site" evidence="16">
    <location>
        <position position="2578"/>
    </location>
    <ligand>
        <name>S-adenosyl-L-methionine</name>
        <dbReference type="ChEBI" id="CHEBI:59789"/>
    </ligand>
</feature>
<feature type="binding site" evidence="16">
    <location>
        <position position="2595"/>
    </location>
    <ligand>
        <name>S-adenosyl-L-methionine</name>
        <dbReference type="ChEBI" id="CHEBI:59789"/>
    </ligand>
</feature>
<feature type="binding site" evidence="16">
    <location>
        <position position="2596"/>
    </location>
    <ligand>
        <name>S-adenosyl-L-methionine</name>
        <dbReference type="ChEBI" id="CHEBI:59789"/>
    </ligand>
</feature>
<feature type="binding site" evidence="16">
    <location>
        <position position="2622"/>
    </location>
    <ligand>
        <name>S-adenosyl-L-methionine</name>
        <dbReference type="ChEBI" id="CHEBI:59789"/>
    </ligand>
</feature>
<feature type="binding site" evidence="16">
    <location>
        <position position="2623"/>
    </location>
    <ligand>
        <name>S-adenosyl-L-methionine</name>
        <dbReference type="ChEBI" id="CHEBI:59789"/>
    </ligand>
</feature>
<feature type="binding site" evidence="16">
    <location>
        <position position="2638"/>
    </location>
    <ligand>
        <name>S-adenosyl-L-methionine</name>
        <dbReference type="ChEBI" id="CHEBI:59789"/>
    </ligand>
</feature>
<feature type="binding site" evidence="16">
    <location>
        <position position="2710"/>
    </location>
    <ligand>
        <name>S-adenosyl-L-methionine</name>
        <dbReference type="ChEBI" id="CHEBI:59789"/>
    </ligand>
</feature>
<feature type="binding site" evidence="8">
    <location>
        <position position="2929"/>
    </location>
    <ligand>
        <name>Zn(2+)</name>
        <dbReference type="ChEBI" id="CHEBI:29105"/>
        <label>1</label>
    </ligand>
</feature>
<feature type="binding site" evidence="8">
    <location>
        <position position="2933"/>
    </location>
    <ligand>
        <name>Zn(2+)</name>
        <dbReference type="ChEBI" id="CHEBI:29105"/>
        <label>1</label>
    </ligand>
</feature>
<feature type="binding site" evidence="8">
    <location>
        <position position="2938"/>
    </location>
    <ligand>
        <name>Zn(2+)</name>
        <dbReference type="ChEBI" id="CHEBI:29105"/>
        <label>1</label>
    </ligand>
</feature>
<feature type="binding site" evidence="8">
    <location>
        <position position="2941"/>
    </location>
    <ligand>
        <name>Zn(2+)</name>
        <dbReference type="ChEBI" id="CHEBI:29105"/>
        <label>1</label>
    </ligand>
</feature>
<feature type="binding site" evidence="8">
    <location>
        <position position="3203"/>
    </location>
    <ligand>
        <name>Zn(2+)</name>
        <dbReference type="ChEBI" id="CHEBI:29105"/>
        <label>2</label>
    </ligand>
</feature>
<feature type="binding site" evidence="8">
    <location>
        <position position="3219"/>
    </location>
    <ligand>
        <name>Zn(2+)</name>
        <dbReference type="ChEBI" id="CHEBI:29105"/>
        <label>2</label>
    </ligand>
</feature>
<feature type="binding site" evidence="8">
    <location>
        <position position="3338"/>
    </location>
    <ligand>
        <name>Zn(2+)</name>
        <dbReference type="ChEBI" id="CHEBI:29105"/>
        <label>2</label>
    </ligand>
</feature>
<feature type="site" description="Cleavage; by viral protease NS3" evidence="6">
    <location>
        <begin position="100"/>
        <end position="101"/>
    </location>
</feature>
<feature type="site" description="Cleavage; by host signal peptidase" evidence="6">
    <location>
        <begin position="114"/>
        <end position="115"/>
    </location>
</feature>
<feature type="site" description="Cleavage; by host furin" evidence="6 10">
    <location>
        <begin position="205"/>
        <end position="206"/>
    </location>
</feature>
<feature type="site" description="Cleavage; by host signal peptidase" evidence="6">
    <location>
        <begin position="280"/>
        <end position="281"/>
    </location>
</feature>
<feature type="site" description="Cleavage; by host signal peptidase" evidence="6">
    <location>
        <begin position="775"/>
        <end position="776"/>
    </location>
</feature>
<feature type="site" description="Cleavage; by host" evidence="6">
    <location>
        <begin position="1127"/>
        <end position="1128"/>
    </location>
</feature>
<feature type="site" description="Cleavage; by viral protease NS3" evidence="6">
    <location>
        <begin position="1345"/>
        <end position="1346"/>
    </location>
</feature>
<feature type="site" description="Cleavage; by autolysis" evidence="6">
    <location>
        <begin position="1475"/>
        <end position="1476"/>
    </location>
</feature>
<feature type="site" description="Involved in NS3 ATPase and RTPase activities" evidence="2">
    <location>
        <position position="1932"/>
    </location>
</feature>
<feature type="site" description="Involved in NS3 ATPase and RTPase activities" evidence="2">
    <location>
        <position position="1935"/>
    </location>
</feature>
<feature type="site" description="Cleavage; by autolysis" evidence="6">
    <location>
        <begin position="2093"/>
        <end position="2094"/>
    </location>
</feature>
<feature type="site" description="Cleavage; by viral protease NS3" evidence="6">
    <location>
        <begin position="2220"/>
        <end position="2221"/>
    </location>
</feature>
<feature type="site" description="Cleavage; by host signal peptidase" evidence="6">
    <location>
        <begin position="2243"/>
        <end position="2244"/>
    </location>
</feature>
<feature type="site" description="Cleavage; by viral protease NS3" evidence="6">
    <location>
        <begin position="2491"/>
        <end position="2492"/>
    </location>
</feature>
<feature type="site" description="mRNA cap binding" evidence="16">
    <location>
        <position position="2505"/>
    </location>
</feature>
<feature type="site" description="mRNA cap binding; via carbonyl oxygen" evidence="16">
    <location>
        <position position="2508"/>
    </location>
</feature>
<feature type="site" description="mRNA cap binding" evidence="16">
    <location>
        <position position="2509"/>
    </location>
</feature>
<feature type="site" description="mRNA cap binding; via carbonyl oxygen" evidence="16">
    <location>
        <position position="2511"/>
    </location>
</feature>
<feature type="site" description="mRNA cap binding" evidence="16">
    <location>
        <position position="2516"/>
    </location>
</feature>
<feature type="site" description="mRNA cap binding" evidence="16">
    <location>
        <position position="2520"/>
    </location>
</feature>
<feature type="site" description="Essential for 2'-O-methyltransferase activity" evidence="16">
    <location>
        <position position="2552"/>
    </location>
</feature>
<feature type="site" description="Essential for 2'-O-methyltransferase and N-7 methyltransferase activity" evidence="16">
    <location>
        <position position="2637"/>
    </location>
</feature>
<feature type="site" description="mRNA cap binding" evidence="16">
    <location>
        <position position="2641"/>
    </location>
</feature>
<feature type="site" description="Essential for 2'-O-methyltransferase activity" evidence="16">
    <location>
        <position position="2672"/>
    </location>
</feature>
<feature type="site" description="mRNA cap binding" evidence="16">
    <location>
        <position position="2703"/>
    </location>
</feature>
<feature type="site" description="mRNA cap binding" evidence="16">
    <location>
        <position position="2705"/>
    </location>
</feature>
<feature type="site" description="Essential for 2'-O-methyltransferase activity" evidence="16">
    <location>
        <position position="2708"/>
    </location>
</feature>
<feature type="modified residue" description="N6-acetyllysine; by host" evidence="7">
    <location>
        <position position="1863"/>
    </location>
</feature>
<feature type="modified residue" description="Phosphoserine" evidence="1">
    <location>
        <position position="2547"/>
    </location>
</feature>
<feature type="glycosylation site" description="N-linked (GlcNAc...) asparagine; by host" evidence="11">
    <location>
        <position position="183"/>
    </location>
</feature>
<feature type="glycosylation site" description="N-linked (GlcNAc...) asparagine; by host" evidence="11">
    <location>
        <position position="347"/>
    </location>
</feature>
<feature type="glycosylation site" description="N-linked (GlcNAc...) asparagine; by host" evidence="11">
    <location>
        <position position="433"/>
    </location>
</feature>
<feature type="glycosylation site" description="N-linked (GlcNAc...) asparagine; by host" evidence="11">
    <location>
        <position position="905"/>
    </location>
</feature>
<feature type="glycosylation site" description="N-linked (GlcNAc...) asparagine; by host" evidence="11">
    <location>
        <position position="982"/>
    </location>
</feature>
<feature type="glycosylation site" description="N-linked (GlcNAc...) asparagine; by host" evidence="11">
    <location>
        <position position="1134"/>
    </location>
</feature>
<feature type="glycosylation site" description="N-linked (GlcNAc...) asparagine; by host" evidence="11">
    <location>
        <position position="2301"/>
    </location>
</feature>
<feature type="glycosylation site" description="N-linked (GlcNAc...) asparagine; by host" evidence="11">
    <location>
        <position position="2305"/>
    </location>
</feature>
<feature type="glycosylation site" description="N-linked (GlcNAc...) asparagine; by host" evidence="11">
    <location>
        <position position="2457"/>
    </location>
</feature>
<feature type="disulfide bond" evidence="5">
    <location>
        <begin position="283"/>
        <end position="310"/>
    </location>
</feature>
<feature type="disulfide bond" evidence="5">
    <location>
        <begin position="340"/>
        <end position="401"/>
    </location>
</feature>
<feature type="disulfide bond" evidence="5">
    <location>
        <begin position="354"/>
        <end position="385"/>
    </location>
</feature>
<feature type="disulfide bond" evidence="5">
    <location>
        <begin position="372"/>
        <end position="396"/>
    </location>
</feature>
<feature type="disulfide bond" evidence="5">
    <location>
        <begin position="465"/>
        <end position="565"/>
    </location>
</feature>
<feature type="disulfide bond" evidence="5">
    <location>
        <begin position="582"/>
        <end position="613"/>
    </location>
</feature>
<feature type="disulfide bond" evidence="5">
    <location>
        <begin position="779"/>
        <end position="790"/>
    </location>
</feature>
<feature type="disulfide bond" evidence="5">
    <location>
        <begin position="830"/>
        <end position="918"/>
    </location>
</feature>
<feature type="disulfide bond" evidence="5">
    <location>
        <begin position="954"/>
        <end position="998"/>
    </location>
</feature>
<feature type="disulfide bond" evidence="5">
    <location>
        <begin position="1055"/>
        <end position="1104"/>
    </location>
</feature>
<feature type="disulfide bond" evidence="5">
    <location>
        <begin position="1066"/>
        <end position="1088"/>
    </location>
</feature>
<feature type="disulfide bond" evidence="5">
    <location>
        <begin position="1087"/>
        <end position="1091"/>
    </location>
</feature>
<feature type="strand" evidence="18">
    <location>
        <begin position="584"/>
        <end position="594"/>
    </location>
</feature>
<feature type="strand" evidence="18">
    <location>
        <begin position="600"/>
        <end position="609"/>
    </location>
</feature>
<feature type="strand" evidence="18">
    <location>
        <begin position="633"/>
        <end position="635"/>
    </location>
</feature>
<feature type="strand" evidence="18">
    <location>
        <begin position="641"/>
        <end position="643"/>
    </location>
</feature>
<feature type="strand" evidence="18">
    <location>
        <begin position="660"/>
        <end position="665"/>
    </location>
</feature>
<feature type="helix" evidence="19">
    <location>
        <begin position="2500"/>
        <end position="2509"/>
    </location>
</feature>
<feature type="helix" evidence="19">
    <location>
        <begin position="2513"/>
        <end position="2521"/>
    </location>
</feature>
<feature type="strand" evidence="19">
    <location>
        <begin position="2525"/>
        <end position="2528"/>
    </location>
</feature>
<feature type="helix" evidence="19">
    <location>
        <begin position="2530"/>
        <end position="2537"/>
    </location>
</feature>
<feature type="helix" evidence="19">
    <location>
        <begin position="2549"/>
        <end position="2557"/>
    </location>
</feature>
<feature type="turn" evidence="19">
    <location>
        <begin position="2558"/>
        <end position="2560"/>
    </location>
</feature>
<feature type="strand" evidence="19">
    <location>
        <begin position="2566"/>
        <end position="2571"/>
    </location>
</feature>
<feature type="helix" evidence="19">
    <location>
        <begin position="2577"/>
        <end position="2583"/>
    </location>
</feature>
<feature type="strand" evidence="19">
    <location>
        <begin position="2588"/>
        <end position="2594"/>
    </location>
</feature>
<feature type="helix" evidence="19">
    <location>
        <begin position="2612"/>
        <end position="2614"/>
    </location>
</feature>
<feature type="strand" evidence="19">
    <location>
        <begin position="2615"/>
        <end position="2618"/>
    </location>
</feature>
<feature type="helix" evidence="19">
    <location>
        <begin position="2623"/>
        <end position="2625"/>
    </location>
</feature>
<feature type="strand" evidence="19">
    <location>
        <begin position="2632"/>
        <end position="2636"/>
    </location>
</feature>
<feature type="helix" evidence="19">
    <location>
        <begin position="2645"/>
        <end position="2662"/>
    </location>
</feature>
<feature type="strand" evidence="19">
    <location>
        <begin position="2668"/>
        <end position="2674"/>
    </location>
</feature>
<feature type="helix" evidence="19">
    <location>
        <begin position="2679"/>
        <end position="2692"/>
    </location>
</feature>
<feature type="strand" evidence="19">
    <location>
        <begin position="2695"/>
        <end position="2697"/>
    </location>
</feature>
<feature type="strand" evidence="19">
    <location>
        <begin position="2709"/>
        <end position="2712"/>
    </location>
</feature>
<feature type="helix" evidence="19">
    <location>
        <begin position="2719"/>
        <end position="2732"/>
    </location>
</feature>
<feature type="helix" evidence="19">
    <location>
        <begin position="2733"/>
        <end position="2735"/>
    </location>
</feature>
<feature type="strand" evidence="19">
    <location>
        <begin position="2742"/>
        <end position="2745"/>
    </location>
</feature>
<evidence type="ECO:0000250" key="1">
    <source>
        <dbReference type="UniProtKB" id="P03314"/>
    </source>
</evidence>
<evidence type="ECO:0000250" key="2">
    <source>
        <dbReference type="UniProtKB" id="P14335"/>
    </source>
</evidence>
<evidence type="ECO:0000250" key="3">
    <source>
        <dbReference type="UniProtKB" id="P14336"/>
    </source>
</evidence>
<evidence type="ECO:0000250" key="4">
    <source>
        <dbReference type="UniProtKB" id="P14340"/>
    </source>
</evidence>
<evidence type="ECO:0000250" key="5">
    <source>
        <dbReference type="UniProtKB" id="P17763"/>
    </source>
</evidence>
<evidence type="ECO:0000250" key="6">
    <source>
        <dbReference type="UniProtKB" id="P29990"/>
    </source>
</evidence>
<evidence type="ECO:0000250" key="7">
    <source>
        <dbReference type="UniProtKB" id="Q32ZE1"/>
    </source>
</evidence>
<evidence type="ECO:0000250" key="8">
    <source>
        <dbReference type="UniProtKB" id="Q6YMS4"/>
    </source>
</evidence>
<evidence type="ECO:0000250" key="9">
    <source>
        <dbReference type="UniProtKB" id="Q9Q6P4"/>
    </source>
</evidence>
<evidence type="ECO:0000255" key="10"/>
<evidence type="ECO:0000255" key="11">
    <source>
        <dbReference type="PROSITE-ProRule" id="PRU00498"/>
    </source>
</evidence>
<evidence type="ECO:0000255" key="12">
    <source>
        <dbReference type="PROSITE-ProRule" id="PRU00539"/>
    </source>
</evidence>
<evidence type="ECO:0000255" key="13">
    <source>
        <dbReference type="PROSITE-ProRule" id="PRU00541"/>
    </source>
</evidence>
<evidence type="ECO:0000255" key="14">
    <source>
        <dbReference type="PROSITE-ProRule" id="PRU00859"/>
    </source>
</evidence>
<evidence type="ECO:0000255" key="15">
    <source>
        <dbReference type="PROSITE-ProRule" id="PRU00860"/>
    </source>
</evidence>
<evidence type="ECO:0000255" key="16">
    <source>
        <dbReference type="PROSITE-ProRule" id="PRU00924"/>
    </source>
</evidence>
<evidence type="ECO:0000269" key="17">
    <source>
    </source>
</evidence>
<evidence type="ECO:0007829" key="18">
    <source>
        <dbReference type="PDB" id="2R29"/>
    </source>
</evidence>
<evidence type="ECO:0007829" key="19">
    <source>
        <dbReference type="PDB" id="3EVG"/>
    </source>
</evidence>
<sequence>MNDQRKEAKNTPFNMLKRERNRVSTVQQLTKRFSLGMLQGRGPLKLYMALVAFLRFLTIPPTAGILKRWGTIKKSKAINVLRGFRKEIGRMLNILNRRRRSAGMIIMLIPTVMAFHLTTRNGEPHMIVSRQEKGKSLLFKTEVGVNMCTLMAMDLGELCEDTITYKCPLLRQNEPEDIDCWCNSTSTWVTYGTCTTMGEHRREKRSVALVPHVGMGLETRTETWMSSEGAWKHVQRIETWILRHPGFTMMAAILAYTIGTTHFQRALILILLTAVTPSMTMRCIGMSNRDFVEGVSGGSWVDIVLEHGSCVTTMAKNKPTLDFELIKTEAKQPATLRKYCIEAKLTNTTTESRCPTQGEPSLNEEQDKRFVCKHSMVDRGWGNGCGLFGKGGIVTCAMFRCKKNMEGKVVQPENLEYTIVITPHSGEEHAVGNDTGKHGKEIKITPQSSITEAELTGYGTITMECSPRTGLDFNEIVLLQMENKAWLVHRQWFLDLPLPWLPGADTQGSNWIQKETLVTFKNPHAKKQDVVVLGSQEGAMHTALTGATEIQMSSGNLLFTGHLKCRLRMDKLQLKGMSYSMCTGKFKVVKEIAETQHGTIVIRVQYEGDGSPCKIPFEIMDLEKRHVLGRLITVNPIVTEKDSPVNIEAEPPFGDSYIIIGVEPGQLKLNWFKKGSSIGQMFETTMRGAKRMAILGDTAWDFGSLGGVFTSIGKALHQVFGAIYGAAFSGVSWTMKILIGVIITWIGMNSRSTSLSVTLVLVGIVTLYLGVMVQADSGCVVSWKNKELKCGSGIFITDNVHTWTEQYKFQPESPSKLASAIQKAHEEDICGIRSVTRLENLMWKQITPELNHILSENEVKLTIMTGDIKGIMQAGKRSLRPQPTELKYSWKTWGKAKMLSTESHNQTFFIDGPETAECPNTNRAWNSLEVEDYGFGVFTTNIWLKLKEKQDVFCDSKLMSAAIKDNRAVHADMGYWIESALNDTWKIEKASFIEVKNCHWPKSHTLWSNGVLESEMIIPKNLAGPVSKHNYRPGYHTQITGPWHLGKLEMDFDFCDGTTVVVTEDCGNRGPSLRTTTASGKLITEWCCRSCTLPPLRYRGEDGCWYGMEIRPLKEKEENLVNSLVTAGHGQVDNFSLGVLGMALFLEEMLRTRVGTKHAILLVAVSFVTLIIGNRSFRDLGRVMVMVGATMTDDIGMGVTYLALLAAFKVRPTFAAGLLLRKLTSKELMMTTIGIVLSSQSTIPETILELTDALALGMMVLKMVRNMEKYQLAVTIMAILCVPNAVILQNAWKVSCTILAVVSVSPLFLTSSQQKTDWIPLALTIKGLNPTAIFLTTLSRTSKKRSWPLNEAIMAVGMVSILASSLLKNDIPMTGPLVAGGLLTVCYVLTGRSADLELERAADVKWEDQAEISGSSPILSITISEDGSMSIKNEEEEQTLTILIRRGLLVISGLFPVSIPITAAAWYLWEVKKQRAGVLWDVPSPPPMGKAELEDGAYRIKQKGILGYSQIGAGVYKEGTFHTMWHVTRGAVLMHKGKRIEPSWADVKKDLISYGGGWKLEGEWKEGEEVQVLALDPGKNPRAVQTKPGLFKTNAGTIGAVSLDFSPGTSGSPIIDKKGKVVGLYGNGVVTRSGAYVSAIAQTEKSIEDNPEIEDDIFRKRRLTIMDLHPGAGKTKRYLPAIVREAIKRGLRTLILAPTRVVAAEMEEALRGLPIRYQTPAIRAEHTGREIVDLMCHATFTMRLLSPVRVPNYNLIIMDEAHFTDPASIAARGYISTRVEMGEAAGIFMTATPPGSRDPFPQSNAPIIDEEREIPERSWNSGHEWVTDFKGKTVWFVPSIKAGNDIAACLRKNGKKVIQLSRKTFDSEYVKTRTNDWDFVVTTDISEMGANFKAERVIDPRRCMKPVILTDGEERVILAGPMPVTHSSAAQRRGRIGRNPKNENDQYIYMGEPLENDEDCAHWKEAKMLLDNINTPEGIIPSMFEPEREKVDAIDGEYRLRGEARTTFVDLMRRGDLPVWLAYRVAAEGINYADRRWCFDGVKNNQILEENVEVEIWTKEGERKKLKPRWLDARIYSDPLALKEFKEFAAGRKSLTLNLITEMGRLPTFMTQKARNALDNLAVLHTAEAGGRAYNHALSELPETLETLLLLTLLATVTGGIFLFLMSARGIGKMTLGMCCIITASILLWYAQIQPHWIAASIILEFFLIVLLIPEPEKQRTPQDNQLTYVVIAILTVVAATMANEMGFLEKTKKDLGLGSIATQQPESNILDIDLRPASAWTLYAVATTFVTPMLRHSIENSSVNVSLTAIANQATVLMGLGKGWPLSKMDIGVPLLAIGCYSQVNPTTLTAALFLLVAHYAIIGPALQAKASREAQKRAAAGIMKNPTVDGITVIDLDPIPYDPKFEKQLGQVMLLVLCVTQVLMMRTTWALCEALTLATGPISTLSEGNPGRFWNTTIAVSMANIFRGSYLAGAGLLFSIMKNTTNTRRVTGNIGETLGEKWKSRLNALGKSEFQIYKKSGIQEVDRTLAKEGIKRGETDHHAVSRGSAKLRWFVERNMVTPEGKVVDLGCGRGGWSYYCGGLKNVREVKGLTKGGPGHEEPIPMSTYGWNLVRLQSGVDVFFIPPEKCDTLLCDIGESSPNPTVEAGRTLRVLNLVENWLNNNTQFCIKVLNPYMPSVIEKMEALQRKYGGALVRNPLSRNSTHEMYWVSNASGNIVSSVNMISRMLINRFTMRYKKATYEPDVDLGSGTRNIGIESEIPNLDIIGKRIEKIKQEHETSWHYDQDHPYKTWAYHGSYETKQTGSASSMVNGVFRLLTKPWDVVPMVTQMAMTDTTPFGQQRVFKEKVDTRTQEPKEGTKKLMKITAEWLWKELGKKKTPRMCTREEFTRKVRSNAALGAIFTDENKWKSAREAVEDSRFWELVDKERNLHLEGKCETCVYNIMGKREKKLGEFGKAKGSRAIWYMWLGARFLEFEALGFLNEDHWFSRENSLSGVEGEGLHKLGYILRDVSKKEGGAMYADDTAGWDTRITLEDLKNEEMVTNHMEGEHKKLAEAIFKLTYQNKVVRVQRPTPRGTVMDIISRRDQRGSGQVGTYGLNTFTNMEAQLIRQMEGEGVFKSIQHLTITEEIAVQNWLARVGRERLSRMAISGDDCVVKPLDDRLPSALTALNDMGKIRKDIQQWEPSRGWNDWTQVPFCSHHFHELIMKDGRVLVVPCRNQDELIGRARISQGAGWSLRETACLGKSYAQMWSLMYFHRRDLRLAANAICSAVPSHWVPTSRTTWSIHAKHEWMTTEDMLTVWNRVWIQENPWMEDKTPVESWEEIPYLGKREDQWCGSLIGLTSRATWAKNIQAAINQVRSLIGNEEYTDYMPSMKRFRREEEEAGVLW</sequence>
<proteinExistence type="evidence at protein level"/>
<organism>
    <name type="scientific">Dengue virus type 2 (strain 16681-PDK53)</name>
    <name type="common">DENV-2</name>
    <dbReference type="NCBI Taxonomy" id="31635"/>
    <lineage>
        <taxon>Viruses</taxon>
        <taxon>Riboviria</taxon>
        <taxon>Orthornavirae</taxon>
        <taxon>Kitrinoviricota</taxon>
        <taxon>Flasuviricetes</taxon>
        <taxon>Amarillovirales</taxon>
        <taxon>Flaviviridae</taxon>
        <taxon>Orthoflavivirus</taxon>
        <taxon>Orthoflavivirus denguei</taxon>
        <taxon>Dengue virus</taxon>
    </lineage>
</organism>
<accession>P29991</accession>
<name>POLG_DEN27</name>
<protein>
    <recommendedName>
        <fullName>Genome polyprotein</fullName>
    </recommendedName>
    <component>
        <recommendedName>
            <fullName>Capsid protein C</fullName>
        </recommendedName>
        <alternativeName>
            <fullName>Core protein</fullName>
        </alternativeName>
    </component>
    <component>
        <recommendedName>
            <fullName>Protein prM</fullName>
        </recommendedName>
    </component>
    <component>
        <recommendedName>
            <fullName>Peptide pr</fullName>
        </recommendedName>
    </component>
    <component>
        <recommendedName>
            <fullName>Small envelope protein M</fullName>
        </recommendedName>
        <alternativeName>
            <fullName>Matrix protein</fullName>
        </alternativeName>
    </component>
    <component>
        <recommendedName>
            <fullName>Envelope protein E</fullName>
        </recommendedName>
    </component>
    <component>
        <recommendedName>
            <fullName>Non-structural protein 1</fullName>
            <shortName>NS1</shortName>
        </recommendedName>
    </component>
    <component>
        <recommendedName>
            <fullName>Non-structural protein 2A</fullName>
            <shortName>NS2A</shortName>
        </recommendedName>
    </component>
    <component>
        <recommendedName>
            <fullName>Serine protease subunit NS2B</fullName>
        </recommendedName>
        <alternativeName>
            <fullName>Flavivirin protease NS2B regulatory subunit</fullName>
        </alternativeName>
        <alternativeName>
            <fullName>Non-structural protein 2B</fullName>
        </alternativeName>
    </component>
    <component>
        <recommendedName>
            <fullName>Serine protease NS3</fullName>
            <ecNumber>3.4.21.91</ecNumber>
            <ecNumber evidence="9">3.6.1.15</ecNumber>
            <ecNumber evidence="9">3.6.4.13</ecNumber>
        </recommendedName>
        <alternativeName>
            <fullName>Flavivirin protease NS3 catalytic subunit</fullName>
        </alternativeName>
        <alternativeName>
            <fullName>Non-structural protein 3</fullName>
        </alternativeName>
    </component>
    <component>
        <recommendedName>
            <fullName>Non-structural protein 4A</fullName>
            <shortName>NS4A</shortName>
        </recommendedName>
    </component>
    <component>
        <recommendedName>
            <fullName>Peptide 2k</fullName>
        </recommendedName>
    </component>
    <component>
        <recommendedName>
            <fullName>Non-structural protein 4B</fullName>
            <shortName>NS4B</shortName>
        </recommendedName>
    </component>
    <component>
        <recommendedName>
            <fullName>RNA-directed RNA polymerase NS5</fullName>
            <ecNumber evidence="16">2.1.1.56</ecNumber>
            <ecNumber evidence="16">2.1.1.57</ecNumber>
            <ecNumber evidence="12">2.7.7.48</ecNumber>
        </recommendedName>
        <alternativeName>
            <fullName>Non-structural protein 5</fullName>
        </alternativeName>
    </component>
</protein>
<reference key="1">
    <citation type="journal article" date="1992" name="Virology">
        <title>Comparison of a dengue-2 virus and its candidate vaccine derivative: sequence relationships with the flaviviruses and other viruses.</title>
        <authorList>
            <person name="Blok J."/>
            <person name="McWilliam S.M."/>
            <person name="Butler H.C."/>
            <person name="Gibbs A.J."/>
            <person name="Weiller G."/>
            <person name="Herring B.L."/>
            <person name="Hemsley A.C."/>
            <person name="Aaskov J.G."/>
            <person name="Yoksan S."/>
            <person name="Bhamarapravati N."/>
        </authorList>
    </citation>
    <scope>NUCLEOTIDE SEQUENCE [GENOMIC RNA]</scope>
</reference>
<reference key="2">
    <citation type="journal article" date="2015" name="PLoS Pathog.">
        <title>Dengue virus non-structural protein 1 modulates infectious particle production via interaction with the structural proteins.</title>
        <authorList>
            <person name="Scaturro P."/>
            <person name="Cortese M."/>
            <person name="Chatel-Chaix L."/>
            <person name="Fischl W."/>
            <person name="Bartenschlager R."/>
        </authorList>
    </citation>
    <scope>FUNCTION (NON-STRUCTURAL PROTEIN 1)</scope>
</reference>
<reference key="3">
    <citation type="journal article" date="2018" name="Cell Host Microbe">
        <title>Flaviviruses Exploit the Lipid Droplet Protein AUP1 to Trigger Lipophagy and Drive Virus Production.</title>
        <authorList>
            <person name="Zhang J."/>
            <person name="Lan Y."/>
            <person name="Li M.Y."/>
            <person name="Lamers M.M."/>
            <person name="Fusade-Boyer M."/>
            <person name="Klemm E."/>
            <person name="Thiele C."/>
            <person name="Ashour J."/>
            <person name="Sanyal S."/>
        </authorList>
    </citation>
    <scope>FUNCTION (NON-STRUCTURAL PROTEIN 4A)</scope>
    <scope>INTERACTION WITH HUMAN AUP1 (NON-STRUCTURAL PROTEIN 4A)</scope>
</reference>
<reference key="4">
    <citation type="journal article" date="2008" name="Nat. Struct. Mol. Biol.">
        <title>Binding of a neutralizing antibody to dengue virus alters the arrangement of surface glycoproteins.</title>
        <authorList>
            <person name="Lok S.M."/>
            <person name="Kostyuchenko V."/>
            <person name="Nybakken G.E."/>
            <person name="Holdaway H.A."/>
            <person name="Battisti A.J."/>
            <person name="Sukupolvi-Petty S."/>
            <person name="Sedlak D."/>
            <person name="Fremont D.H."/>
            <person name="Chipman P.R."/>
            <person name="Roehrig J.T."/>
            <person name="Diamond M.S."/>
            <person name="Kuhn R.J."/>
            <person name="Rossmann M.G."/>
        </authorList>
    </citation>
    <scope>X-RAY CRYSTALLOGRAPHY (3.0 ANGSTROMS) OF 578-674</scope>
</reference>
<reference key="5">
    <citation type="journal article" date="2009" name="J. Mol. Biol.">
        <title>Analysis of flavivirus NS5 methyltransferase cap binding.</title>
        <authorList>
            <person name="Geiss B.J."/>
            <person name="Thompson A.A."/>
            <person name="Andrews A.J."/>
            <person name="Sons R.L."/>
            <person name="Gari H.H."/>
            <person name="Keenan S.M."/>
            <person name="Peersen O.B."/>
        </authorList>
    </citation>
    <scope>X-RAY CRYSTALLOGRAPHY (2.1 ANGSTROMS) OF 2493-2757</scope>
</reference>
<organismHost>
    <name type="scientific">Aedes aegypti</name>
    <name type="common">Yellowfever mosquito</name>
    <name type="synonym">Culex aegypti</name>
    <dbReference type="NCBI Taxonomy" id="7159"/>
</organismHost>
<organismHost>
    <name type="scientific">Aedes furcifer</name>
    <name type="common">Mosquito</name>
    <dbReference type="NCBI Taxonomy" id="299627"/>
</organismHost>
<organismHost>
    <name type="scientific">Aedes taylori</name>
    <name type="common">Mosquito</name>
    <dbReference type="NCBI Taxonomy" id="299628"/>
</organismHost>
<organismHost>
    <name type="scientific">Erythrocebus patas</name>
    <name type="common">Red guenon</name>
    <name type="synonym">Cercopithecus patas</name>
    <dbReference type="NCBI Taxonomy" id="9538"/>
</organismHost>
<organismHost>
    <name type="scientific">Homo sapiens</name>
    <name type="common">Human</name>
    <dbReference type="NCBI Taxonomy" id="9606"/>
</organismHost>
<dbReference type="EC" id="3.4.21.91"/>
<dbReference type="EC" id="3.6.1.15" evidence="9"/>
<dbReference type="EC" id="3.6.4.13" evidence="9"/>
<dbReference type="EC" id="2.1.1.56" evidence="16"/>
<dbReference type="EC" id="2.1.1.57" evidence="16"/>
<dbReference type="EC" id="2.7.7.48" evidence="12"/>
<dbReference type="EMBL" id="M84728">
    <property type="protein sequence ID" value="AAA73186.1"/>
    <property type="molecule type" value="Genomic_RNA"/>
</dbReference>
<dbReference type="PIR" id="B42451">
    <property type="entry name" value="GNWV26"/>
</dbReference>
<dbReference type="PDB" id="2R29">
    <property type="method" value="X-ray"/>
    <property type="resolution" value="3.00 A"/>
    <property type="chains" value="A=578-674"/>
</dbReference>
<dbReference type="PDB" id="3EVG">
    <property type="method" value="X-ray"/>
    <property type="resolution" value="2.20 A"/>
    <property type="chains" value="A=2493-2757"/>
</dbReference>
<dbReference type="PDB" id="6FLA">
    <property type="method" value="X-ray"/>
    <property type="resolution" value="2.90 A"/>
    <property type="chains" value="I=577-677"/>
</dbReference>
<dbReference type="PDBsum" id="2R29"/>
<dbReference type="PDBsum" id="3EVG"/>
<dbReference type="PDBsum" id="6FLA"/>
<dbReference type="BMRB" id="P29991"/>
<dbReference type="SMR" id="P29991"/>
<dbReference type="IntAct" id="P29991">
    <property type="interactions" value="108"/>
</dbReference>
<dbReference type="BindingDB" id="P29991"/>
<dbReference type="MEROPS" id="S07.001"/>
<dbReference type="ABCD" id="P29991">
    <property type="antibodies" value="9 sequenced antibodies"/>
</dbReference>
<dbReference type="BRENDA" id="2.7.7.48">
    <property type="organism ID" value="1867"/>
</dbReference>
<dbReference type="EvolutionaryTrace" id="P29991"/>
<dbReference type="PRO" id="PR:P29991"/>
<dbReference type="Proteomes" id="UP000008390">
    <property type="component" value="Genome"/>
</dbReference>
<dbReference type="GO" id="GO:0005576">
    <property type="term" value="C:extracellular region"/>
    <property type="evidence" value="ECO:0007669"/>
    <property type="project" value="UniProtKB-SubCell"/>
</dbReference>
<dbReference type="GO" id="GO:0044167">
    <property type="term" value="C:host cell endoplasmic reticulum membrane"/>
    <property type="evidence" value="ECO:0007669"/>
    <property type="project" value="UniProtKB-SubCell"/>
</dbReference>
<dbReference type="GO" id="GO:0033650">
    <property type="term" value="C:host cell mitochondrion"/>
    <property type="evidence" value="ECO:0007669"/>
    <property type="project" value="UniProtKB-SubCell"/>
</dbReference>
<dbReference type="GO" id="GO:0042025">
    <property type="term" value="C:host cell nucleus"/>
    <property type="evidence" value="ECO:0007669"/>
    <property type="project" value="UniProtKB-SubCell"/>
</dbReference>
<dbReference type="GO" id="GO:0044220">
    <property type="term" value="C:host cell perinuclear region of cytoplasm"/>
    <property type="evidence" value="ECO:0007669"/>
    <property type="project" value="UniProtKB-SubCell"/>
</dbReference>
<dbReference type="GO" id="GO:0016020">
    <property type="term" value="C:membrane"/>
    <property type="evidence" value="ECO:0007669"/>
    <property type="project" value="UniProtKB-KW"/>
</dbReference>
<dbReference type="GO" id="GO:0019028">
    <property type="term" value="C:viral capsid"/>
    <property type="evidence" value="ECO:0007669"/>
    <property type="project" value="UniProtKB-KW"/>
</dbReference>
<dbReference type="GO" id="GO:0019031">
    <property type="term" value="C:viral envelope"/>
    <property type="evidence" value="ECO:0007669"/>
    <property type="project" value="UniProtKB-KW"/>
</dbReference>
<dbReference type="GO" id="GO:0055036">
    <property type="term" value="C:virion membrane"/>
    <property type="evidence" value="ECO:0007669"/>
    <property type="project" value="UniProtKB-SubCell"/>
</dbReference>
<dbReference type="GO" id="GO:0005524">
    <property type="term" value="F:ATP binding"/>
    <property type="evidence" value="ECO:0007669"/>
    <property type="project" value="UniProtKB-KW"/>
</dbReference>
<dbReference type="GO" id="GO:0016887">
    <property type="term" value="F:ATP hydrolysis activity"/>
    <property type="evidence" value="ECO:0007669"/>
    <property type="project" value="RHEA"/>
</dbReference>
<dbReference type="GO" id="GO:0015267">
    <property type="term" value="F:channel activity"/>
    <property type="evidence" value="ECO:0007669"/>
    <property type="project" value="UniProtKB-KW"/>
</dbReference>
<dbReference type="GO" id="GO:0003725">
    <property type="term" value="F:double-stranded RNA binding"/>
    <property type="evidence" value="ECO:0007669"/>
    <property type="project" value="InterPro"/>
</dbReference>
<dbReference type="GO" id="GO:0046872">
    <property type="term" value="F:metal ion binding"/>
    <property type="evidence" value="ECO:0007669"/>
    <property type="project" value="UniProtKB-KW"/>
</dbReference>
<dbReference type="GO" id="GO:0004483">
    <property type="term" value="F:mRNA (nucleoside-2'-O-)-methyltransferase activity"/>
    <property type="evidence" value="ECO:0007669"/>
    <property type="project" value="UniProtKB-EC"/>
</dbReference>
<dbReference type="GO" id="GO:0004482">
    <property type="term" value="F:mRNA 5'-cap (guanine-N7-)-methyltransferase activity"/>
    <property type="evidence" value="ECO:0007669"/>
    <property type="project" value="UniProtKB-EC"/>
</dbReference>
<dbReference type="GO" id="GO:0046983">
    <property type="term" value="F:protein dimerization activity"/>
    <property type="evidence" value="ECO:0007669"/>
    <property type="project" value="InterPro"/>
</dbReference>
<dbReference type="GO" id="GO:0003724">
    <property type="term" value="F:RNA helicase activity"/>
    <property type="evidence" value="ECO:0007669"/>
    <property type="project" value="UniProtKB-EC"/>
</dbReference>
<dbReference type="GO" id="GO:0003968">
    <property type="term" value="F:RNA-directed RNA polymerase activity"/>
    <property type="evidence" value="ECO:0007669"/>
    <property type="project" value="UniProtKB-KW"/>
</dbReference>
<dbReference type="GO" id="GO:0004252">
    <property type="term" value="F:serine-type endopeptidase activity"/>
    <property type="evidence" value="ECO:0007669"/>
    <property type="project" value="InterPro"/>
</dbReference>
<dbReference type="GO" id="GO:0005198">
    <property type="term" value="F:structural molecule activity"/>
    <property type="evidence" value="ECO:0007669"/>
    <property type="project" value="InterPro"/>
</dbReference>
<dbReference type="GO" id="GO:0075512">
    <property type="term" value="P:clathrin-dependent endocytosis of virus by host cell"/>
    <property type="evidence" value="ECO:0007669"/>
    <property type="project" value="UniProtKB-KW"/>
</dbReference>
<dbReference type="GO" id="GO:0039654">
    <property type="term" value="P:fusion of virus membrane with host endosome membrane"/>
    <property type="evidence" value="ECO:0007669"/>
    <property type="project" value="UniProtKB-KW"/>
</dbReference>
<dbReference type="GO" id="GO:0034220">
    <property type="term" value="P:monoatomic ion transmembrane transport"/>
    <property type="evidence" value="ECO:0007669"/>
    <property type="project" value="UniProtKB-KW"/>
</dbReference>
<dbReference type="GO" id="GO:0006508">
    <property type="term" value="P:proteolysis"/>
    <property type="evidence" value="ECO:0007669"/>
    <property type="project" value="UniProtKB-KW"/>
</dbReference>
<dbReference type="GO" id="GO:0039520">
    <property type="term" value="P:symbiont-mediated activation of host autophagy"/>
    <property type="evidence" value="ECO:0007669"/>
    <property type="project" value="UniProtKB-KW"/>
</dbReference>
<dbReference type="GO" id="GO:0039545">
    <property type="term" value="P:symbiont-mediated suppression of host cytoplasmic pattern recognition receptor signaling pathway via inhibition of MAVS activity"/>
    <property type="evidence" value="ECO:0007669"/>
    <property type="project" value="UniProtKB-KW"/>
</dbReference>
<dbReference type="GO" id="GO:0039574">
    <property type="term" value="P:symbiont-mediated suppression of host JAK-STAT cascade via inhibition of host TYK2 activity"/>
    <property type="evidence" value="ECO:0007669"/>
    <property type="project" value="UniProtKB-KW"/>
</dbReference>
<dbReference type="GO" id="GO:0039564">
    <property type="term" value="P:symbiont-mediated suppression of host JAK-STAT cascade via inhibition of STAT2 activity"/>
    <property type="evidence" value="ECO:0007669"/>
    <property type="project" value="UniProtKB-KW"/>
</dbReference>
<dbReference type="GO" id="GO:0039502">
    <property type="term" value="P:symbiont-mediated suppression of host type I interferon-mediated signaling pathway"/>
    <property type="evidence" value="ECO:0007669"/>
    <property type="project" value="UniProtKB-KW"/>
</dbReference>
<dbReference type="GO" id="GO:0039694">
    <property type="term" value="P:viral RNA genome replication"/>
    <property type="evidence" value="ECO:0007669"/>
    <property type="project" value="InterPro"/>
</dbReference>
<dbReference type="GO" id="GO:0019062">
    <property type="term" value="P:virion attachment to host cell"/>
    <property type="evidence" value="ECO:0007669"/>
    <property type="project" value="UniProtKB-KW"/>
</dbReference>
<dbReference type="CDD" id="cd20761">
    <property type="entry name" value="capping_2-OMTase_Flaviviridae"/>
    <property type="match status" value="1"/>
</dbReference>
<dbReference type="CDD" id="cd17931">
    <property type="entry name" value="DEXHc_viral_Ns3"/>
    <property type="match status" value="1"/>
</dbReference>
<dbReference type="CDD" id="cd12149">
    <property type="entry name" value="Flavi_E_C"/>
    <property type="match status" value="1"/>
</dbReference>
<dbReference type="CDD" id="cd17038">
    <property type="entry name" value="Flavi_M"/>
    <property type="match status" value="1"/>
</dbReference>
<dbReference type="CDD" id="cd23204">
    <property type="entry name" value="Flavivirus_RdRp"/>
    <property type="match status" value="1"/>
</dbReference>
<dbReference type="CDD" id="cd18806">
    <property type="entry name" value="SF2_C_viral"/>
    <property type="match status" value="1"/>
</dbReference>
<dbReference type="FunFam" id="1.20.1280.260:FF:000001">
    <property type="entry name" value="Envelope glycoprotein"/>
    <property type="match status" value="1"/>
</dbReference>
<dbReference type="FunFam" id="2.60.40.350:FF:000001">
    <property type="entry name" value="Envelope glycoprotein"/>
    <property type="match status" value="1"/>
</dbReference>
<dbReference type="FunFam" id="1.10.10.930:FF:000001">
    <property type="entry name" value="Genome polyprotein"/>
    <property type="match status" value="1"/>
</dbReference>
<dbReference type="FunFam" id="2.60.260.50:FF:000001">
    <property type="entry name" value="Genome polyprotein"/>
    <property type="match status" value="1"/>
</dbReference>
<dbReference type="FunFam" id="3.30.70.2840:FF:000001">
    <property type="entry name" value="Genome polyprotein"/>
    <property type="match status" value="1"/>
</dbReference>
<dbReference type="FunFam" id="3.30.70.2840:FF:000002">
    <property type="entry name" value="Genome polyprotein"/>
    <property type="match status" value="1"/>
</dbReference>
<dbReference type="FunFam" id="3.40.50.150:FF:000105">
    <property type="entry name" value="Genome polyprotein"/>
    <property type="match status" value="1"/>
</dbReference>
<dbReference type="FunFam" id="3.40.50.300:FF:000763">
    <property type="entry name" value="Genome polyprotein"/>
    <property type="match status" value="1"/>
</dbReference>
<dbReference type="Gene3D" id="1.10.10.930">
    <property type="match status" value="1"/>
</dbReference>
<dbReference type="Gene3D" id="1.10.260.90">
    <property type="match status" value="1"/>
</dbReference>
<dbReference type="Gene3D" id="1.20.1280.260">
    <property type="match status" value="1"/>
</dbReference>
<dbReference type="Gene3D" id="2.40.10.120">
    <property type="match status" value="2"/>
</dbReference>
<dbReference type="Gene3D" id="2.60.40.350">
    <property type="match status" value="1"/>
</dbReference>
<dbReference type="Gene3D" id="1.10.8.970">
    <property type="entry name" value="Flavivirus envelope glycoprotein M-like"/>
    <property type="match status" value="1"/>
</dbReference>
<dbReference type="Gene3D" id="2.60.260.50">
    <property type="entry name" value="Flavivirus polyprotein propeptide domain"/>
    <property type="match status" value="1"/>
</dbReference>
<dbReference type="Gene3D" id="3.30.70.2840">
    <property type="entry name" value="Flavivirus RNA-directed RNA polymerase, thumb domain"/>
    <property type="match status" value="3"/>
</dbReference>
<dbReference type="Gene3D" id="3.40.50.300">
    <property type="entry name" value="P-loop containing nucleotide triphosphate hydrolases"/>
    <property type="match status" value="2"/>
</dbReference>
<dbReference type="Gene3D" id="2.60.98.10">
    <property type="entry name" value="Tick-borne Encephalitis virus Glycoprotein, domain 1"/>
    <property type="match status" value="1"/>
</dbReference>
<dbReference type="Gene3D" id="2.40.10.10">
    <property type="entry name" value="Trypsin-like serine proteases"/>
    <property type="match status" value="1"/>
</dbReference>
<dbReference type="Gene3D" id="3.40.50.150">
    <property type="entry name" value="Vaccinia Virus protein VP39"/>
    <property type="match status" value="1"/>
</dbReference>
<dbReference type="Gene3D" id="3.30.67.10">
    <property type="entry name" value="Viral Envelope Glycoprotein, domain 2"/>
    <property type="match status" value="1"/>
</dbReference>
<dbReference type="Gene3D" id="3.30.387.10">
    <property type="entry name" value="Viral Envelope Glycoprotein, domain 3"/>
    <property type="match status" value="1"/>
</dbReference>
<dbReference type="InterPro" id="IPR043502">
    <property type="entry name" value="DNA/RNA_pol_sf"/>
</dbReference>
<dbReference type="InterPro" id="IPR000069">
    <property type="entry name" value="Env_glycoprot_M_flavivir"/>
</dbReference>
<dbReference type="InterPro" id="IPR038302">
    <property type="entry name" value="Env_glycoprot_M_sf_flavivir"/>
</dbReference>
<dbReference type="InterPro" id="IPR013755">
    <property type="entry name" value="Flav_gly_cen_dom_subdom1"/>
</dbReference>
<dbReference type="InterPro" id="IPR001122">
    <property type="entry name" value="Flavi_capsidC"/>
</dbReference>
<dbReference type="InterPro" id="IPR037172">
    <property type="entry name" value="Flavi_capsidC_sf"/>
</dbReference>
<dbReference type="InterPro" id="IPR011492">
    <property type="entry name" value="Flavi_DEAD"/>
</dbReference>
<dbReference type="InterPro" id="IPR027287">
    <property type="entry name" value="Flavi_E_Ig-like"/>
</dbReference>
<dbReference type="InterPro" id="IPR026470">
    <property type="entry name" value="Flavi_E_Stem/Anchor_dom"/>
</dbReference>
<dbReference type="InterPro" id="IPR038345">
    <property type="entry name" value="Flavi_E_Stem/Anchor_dom_sf"/>
</dbReference>
<dbReference type="InterPro" id="IPR011998">
    <property type="entry name" value="Flavi_Glycoprot_E_cen/dimer"/>
</dbReference>
<dbReference type="InterPro" id="IPR001157">
    <property type="entry name" value="Flavi_NS1"/>
</dbReference>
<dbReference type="InterPro" id="IPR000752">
    <property type="entry name" value="Flavi_NS2A"/>
</dbReference>
<dbReference type="InterPro" id="IPR000487">
    <property type="entry name" value="Flavi_NS2B"/>
</dbReference>
<dbReference type="InterPro" id="IPR001850">
    <property type="entry name" value="Flavi_NS3_S7"/>
</dbReference>
<dbReference type="InterPro" id="IPR000404">
    <property type="entry name" value="Flavi_NS4A"/>
</dbReference>
<dbReference type="InterPro" id="IPR001528">
    <property type="entry name" value="Flavi_NS4B"/>
</dbReference>
<dbReference type="InterPro" id="IPR046811">
    <property type="entry name" value="Flavi_NS5_thumb"/>
</dbReference>
<dbReference type="InterPro" id="IPR002535">
    <property type="entry name" value="Flavi_propep"/>
</dbReference>
<dbReference type="InterPro" id="IPR038688">
    <property type="entry name" value="Flavi_propep_sf"/>
</dbReference>
<dbReference type="InterPro" id="IPR047530">
    <property type="entry name" value="Flavi_RdRp"/>
</dbReference>
<dbReference type="InterPro" id="IPR000208">
    <property type="entry name" value="Flavi_RdRp_fingers/palm"/>
</dbReference>
<dbReference type="InterPro" id="IPR000336">
    <property type="entry name" value="Flavivir/Alphavir_Ig-like_sf"/>
</dbReference>
<dbReference type="InterPro" id="IPR014412">
    <property type="entry name" value="Gen_Poly_FLV"/>
</dbReference>
<dbReference type="InterPro" id="IPR036253">
    <property type="entry name" value="Glycoprot_cen/dimer_sf"/>
</dbReference>
<dbReference type="InterPro" id="IPR038055">
    <property type="entry name" value="Glycoprot_E_dimer_dom"/>
</dbReference>
<dbReference type="InterPro" id="IPR013756">
    <property type="entry name" value="GlyE_cen_dom_subdom2"/>
</dbReference>
<dbReference type="InterPro" id="IPR014001">
    <property type="entry name" value="Helicase_ATP-bd"/>
</dbReference>
<dbReference type="InterPro" id="IPR001650">
    <property type="entry name" value="Helicase_C-like"/>
</dbReference>
<dbReference type="InterPro" id="IPR014756">
    <property type="entry name" value="Ig_E-set"/>
</dbReference>
<dbReference type="InterPro" id="IPR026490">
    <property type="entry name" value="mRNA_cap_0/1_MeTrfase"/>
</dbReference>
<dbReference type="InterPro" id="IPR049486">
    <property type="entry name" value="NS3-hel_C_flaviviridae"/>
</dbReference>
<dbReference type="InterPro" id="IPR027417">
    <property type="entry name" value="P-loop_NTPase"/>
</dbReference>
<dbReference type="InterPro" id="IPR009003">
    <property type="entry name" value="Peptidase_S1_PA"/>
</dbReference>
<dbReference type="InterPro" id="IPR043504">
    <property type="entry name" value="Peptidase_S1_PA_chymotrypsin"/>
</dbReference>
<dbReference type="InterPro" id="IPR007094">
    <property type="entry name" value="RNA-dir_pol_PSvirus"/>
</dbReference>
<dbReference type="InterPro" id="IPR002877">
    <property type="entry name" value="RNA_MeTrfase_FtsJ_dom"/>
</dbReference>
<dbReference type="InterPro" id="IPR029063">
    <property type="entry name" value="SAM-dependent_MTases_sf"/>
</dbReference>
<dbReference type="NCBIfam" id="TIGR04240">
    <property type="entry name" value="flavi_E_stem"/>
    <property type="match status" value="1"/>
</dbReference>
<dbReference type="Pfam" id="PF20907">
    <property type="entry name" value="Flav_NS3-hel_C"/>
    <property type="match status" value="1"/>
</dbReference>
<dbReference type="Pfam" id="PF01003">
    <property type="entry name" value="Flavi_capsid"/>
    <property type="match status" value="1"/>
</dbReference>
<dbReference type="Pfam" id="PF07652">
    <property type="entry name" value="Flavi_DEAD"/>
    <property type="match status" value="1"/>
</dbReference>
<dbReference type="Pfam" id="PF21659">
    <property type="entry name" value="Flavi_E_stem"/>
    <property type="match status" value="1"/>
</dbReference>
<dbReference type="Pfam" id="PF02832">
    <property type="entry name" value="Flavi_glycop_C"/>
    <property type="match status" value="1"/>
</dbReference>
<dbReference type="Pfam" id="PF00869">
    <property type="entry name" value="Flavi_glycoprot"/>
    <property type="match status" value="1"/>
</dbReference>
<dbReference type="Pfam" id="PF01004">
    <property type="entry name" value="Flavi_M"/>
    <property type="match status" value="1"/>
</dbReference>
<dbReference type="Pfam" id="PF00948">
    <property type="entry name" value="Flavi_NS1"/>
    <property type="match status" value="1"/>
</dbReference>
<dbReference type="Pfam" id="PF01005">
    <property type="entry name" value="Flavi_NS2A"/>
    <property type="match status" value="1"/>
</dbReference>
<dbReference type="Pfam" id="PF01002">
    <property type="entry name" value="Flavi_NS2B"/>
    <property type="match status" value="1"/>
</dbReference>
<dbReference type="Pfam" id="PF01350">
    <property type="entry name" value="Flavi_NS4A"/>
    <property type="match status" value="1"/>
</dbReference>
<dbReference type="Pfam" id="PF01349">
    <property type="entry name" value="Flavi_NS4B"/>
    <property type="match status" value="1"/>
</dbReference>
<dbReference type="Pfam" id="PF00972">
    <property type="entry name" value="Flavi_NS5"/>
    <property type="match status" value="1"/>
</dbReference>
<dbReference type="Pfam" id="PF20483">
    <property type="entry name" value="Flavi_NS5_thumb"/>
    <property type="match status" value="1"/>
</dbReference>
<dbReference type="Pfam" id="PF01570">
    <property type="entry name" value="Flavi_propep"/>
    <property type="match status" value="1"/>
</dbReference>
<dbReference type="Pfam" id="PF01728">
    <property type="entry name" value="FtsJ"/>
    <property type="match status" value="1"/>
</dbReference>
<dbReference type="Pfam" id="PF00949">
    <property type="entry name" value="Peptidase_S7"/>
    <property type="match status" value="1"/>
</dbReference>
<dbReference type="PIRSF" id="PIRSF003817">
    <property type="entry name" value="Gen_Poly_FLV"/>
    <property type="match status" value="1"/>
</dbReference>
<dbReference type="SMART" id="SM00487">
    <property type="entry name" value="DEXDc"/>
    <property type="match status" value="1"/>
</dbReference>
<dbReference type="SMART" id="SM00490">
    <property type="entry name" value="HELICc"/>
    <property type="match status" value="1"/>
</dbReference>
<dbReference type="SUPFAM" id="SSF56672">
    <property type="entry name" value="DNA/RNA polymerases"/>
    <property type="match status" value="1"/>
</dbReference>
<dbReference type="SUPFAM" id="SSF81296">
    <property type="entry name" value="E set domains"/>
    <property type="match status" value="1"/>
</dbReference>
<dbReference type="SUPFAM" id="SSF101257">
    <property type="entry name" value="Flavivirus capsid protein C"/>
    <property type="match status" value="1"/>
</dbReference>
<dbReference type="SUPFAM" id="SSF52540">
    <property type="entry name" value="P-loop containing nucleoside triphosphate hydrolases"/>
    <property type="match status" value="2"/>
</dbReference>
<dbReference type="SUPFAM" id="SSF53335">
    <property type="entry name" value="S-adenosyl-L-methionine-dependent methyltransferases"/>
    <property type="match status" value="1"/>
</dbReference>
<dbReference type="SUPFAM" id="SSF50494">
    <property type="entry name" value="Trypsin-like serine proteases"/>
    <property type="match status" value="1"/>
</dbReference>
<dbReference type="SUPFAM" id="SSF56983">
    <property type="entry name" value="Viral glycoprotein, central and dimerisation domains"/>
    <property type="match status" value="1"/>
</dbReference>
<dbReference type="PROSITE" id="PS51527">
    <property type="entry name" value="FLAVIVIRUS_NS2B"/>
    <property type="match status" value="1"/>
</dbReference>
<dbReference type="PROSITE" id="PS51528">
    <property type="entry name" value="FLAVIVIRUS_NS3PRO"/>
    <property type="match status" value="1"/>
</dbReference>
<dbReference type="PROSITE" id="PS51192">
    <property type="entry name" value="HELICASE_ATP_BIND_1"/>
    <property type="match status" value="1"/>
</dbReference>
<dbReference type="PROSITE" id="PS51194">
    <property type="entry name" value="HELICASE_CTER"/>
    <property type="match status" value="1"/>
</dbReference>
<dbReference type="PROSITE" id="PS50507">
    <property type="entry name" value="RDRP_SSRNA_POS"/>
    <property type="match status" value="1"/>
</dbReference>
<dbReference type="PROSITE" id="PS51591">
    <property type="entry name" value="RNA_CAP01_NS5_MT"/>
    <property type="match status" value="1"/>
</dbReference>
<keyword id="KW-0002">3D-structure</keyword>
<keyword id="KW-0007">Acetylation</keyword>
<keyword id="KW-1072">Activation of host autophagy by virus</keyword>
<keyword id="KW-0067">ATP-binding</keyword>
<keyword id="KW-0167">Capsid protein</keyword>
<keyword id="KW-1165">Clathrin-mediated endocytosis of virus by host</keyword>
<keyword id="KW-0165">Cleavage on pair of basic residues</keyword>
<keyword id="KW-1015">Disulfide bond</keyword>
<keyword id="KW-1170">Fusion of virus membrane with host endosomal membrane</keyword>
<keyword id="KW-1168">Fusion of virus membrane with host membrane</keyword>
<keyword id="KW-0325">Glycoprotein</keyword>
<keyword id="KW-0347">Helicase</keyword>
<keyword id="KW-1035">Host cytoplasm</keyword>
<keyword id="KW-1038">Host endoplasmic reticulum</keyword>
<keyword id="KW-1043">Host membrane</keyword>
<keyword id="KW-1045">Host mitochondrion</keyword>
<keyword id="KW-1048">Host nucleus</keyword>
<keyword id="KW-0945">Host-virus interaction</keyword>
<keyword id="KW-0378">Hydrolase</keyword>
<keyword id="KW-1090">Inhibition of host innate immune response by virus</keyword>
<keyword id="KW-1114">Inhibition of host interferon signaling pathway by virus</keyword>
<keyword id="KW-1097">Inhibition of host MAVS by virus</keyword>
<keyword id="KW-1113">Inhibition of host RLR pathway by virus</keyword>
<keyword id="KW-1106">Inhibition of host STAT2 by virus</keyword>
<keyword id="KW-1112">Inhibition of host TYK2 by virus</keyword>
<keyword id="KW-0922">Interferon antiviral system evasion</keyword>
<keyword id="KW-0407">Ion channel</keyword>
<keyword id="KW-0406">Ion transport</keyword>
<keyword id="KW-0472">Membrane</keyword>
<keyword id="KW-0479">Metal-binding</keyword>
<keyword id="KW-0489">Methyltransferase</keyword>
<keyword id="KW-0506">mRNA capping</keyword>
<keyword id="KW-0507">mRNA processing</keyword>
<keyword id="KW-0511">Multifunctional enzyme</keyword>
<keyword id="KW-0547">Nucleotide-binding</keyword>
<keyword id="KW-0548">Nucleotidyltransferase</keyword>
<keyword id="KW-0597">Phosphoprotein</keyword>
<keyword id="KW-0645">Protease</keyword>
<keyword id="KW-0694">RNA-binding</keyword>
<keyword id="KW-0696">RNA-directed RNA polymerase</keyword>
<keyword id="KW-0949">S-adenosyl-L-methionine</keyword>
<keyword id="KW-0964">Secreted</keyword>
<keyword id="KW-0720">Serine protease</keyword>
<keyword id="KW-0941">Suppressor of RNA silencing</keyword>
<keyword id="KW-0804">Transcription</keyword>
<keyword id="KW-0805">Transcription regulation</keyword>
<keyword id="KW-0808">Transferase</keyword>
<keyword id="KW-0812">Transmembrane</keyword>
<keyword id="KW-1133">Transmembrane helix</keyword>
<keyword id="KW-0813">Transport</keyword>
<keyword id="KW-0832">Ubl conjugation</keyword>
<keyword id="KW-1161">Viral attachment to host cell</keyword>
<keyword id="KW-0261">Viral envelope protein</keyword>
<keyword id="KW-0899">Viral immunoevasion</keyword>
<keyword id="KW-1182">Viral ion channel</keyword>
<keyword id="KW-1162">Viral penetration into host cytoplasm</keyword>
<keyword id="KW-0693">Viral RNA replication</keyword>
<keyword id="KW-0946">Virion</keyword>
<keyword id="KW-1164">Virus endocytosis by host</keyword>
<keyword id="KW-1160">Virus entry into host cell</keyword>
<keyword id="KW-0862">Zinc</keyword>
<comment type="function">
    <molecule>Capsid protein C</molecule>
    <text evidence="5">Plays a role in virus budding by binding to the cell membrane and gathering the viral RNA into a nucleocapsid that forms the core of a mature virus particle. During virus entry, may induce genome penetration into the host cytoplasm after hemifusion induced by the surface proteins. Can migrate to the cell nucleus where it modulates host functions. Overcomes the anti-viral effects of host EXOC1 by sequestering and degrading the latter through the proteasome degradation pathway.</text>
</comment>
<comment type="function">
    <molecule>Capsid protein C</molecule>
    <text evidence="1">Inhibits RNA silencing by interfering with host Dicer.</text>
</comment>
<comment type="function">
    <molecule>Peptide pr</molecule>
    <text evidence="5">Prevents premature fusion activity of envelope proteins in trans-Golgi by binding to envelope protein E at pH6.0. After virion release in extracellular space, gets dissociated from E dimers.</text>
</comment>
<comment type="function">
    <molecule>Protein prM</molecule>
    <text evidence="5">Acts as a chaperone for envelope protein E during intracellular virion assembly by masking and inactivating envelope protein E fusion peptide. prM is the only viral peptide matured by host furin in the trans-Golgi network probably to avoid catastrophic activation of the viral fusion activity in acidic Golgi compartment prior to virion release. prM-E cleavage is inefficient, and many virions are only partially matured. These uncleaved prM would play a role in immune evasion.</text>
</comment>
<comment type="function">
    <molecule>Small envelope protein M</molecule>
    <text evidence="5">May play a role in virus budding. Exerts cytotoxic effects by activating a mitochondrial apoptotic pathway through M ectodomain. May display a viroporin activity.</text>
</comment>
<comment type="function">
    <molecule>Envelope protein E</molecule>
    <text evidence="5">Binds to host cell surface receptor and mediates fusion between viral and cellular membranes. Envelope protein is synthesized in the endoplasmic reticulum in the form of heterodimer with protein prM. They play a role in virion budding in the ER, and the newly formed immature particle is covered with 60 spikes composed of heterodimer between precursor prM and envelope protein E. The virion is transported to the Golgi apparatus where the low pH causes dissociation of PrM-E heterodimers and formation of E homodimers. prM-E cleavage is inefficient, and many virions are only partially matured. These uncleaved prM would play a role in immune evasion.</text>
</comment>
<comment type="function">
    <molecule>Non-structural protein 1</molecule>
    <text evidence="5 6">Involved in immune evasion, pathogenesis and viral replication. Once cleaved off the polyprotein, is targeted to three destinations: the viral replication cycle, the plasma membrane and the extracellular compartment. Essential for viral replication. Required for formation of the replication complex and recruitment of other non-structural proteins to the ER-derived membrane structures. Excreted as a hexameric lipoparticle that plays a role against host immune response. Antagonizing the complement function. Binds to the host macrophages and dendritic cells. Inhibits signal transduction originating from Toll-like receptor 3 (TLR3). Mediates complement activation, which may contribute to the pathogenesis of the vascular leakage that occurs in severe dengue disease. Activates autophagy through the AMPK/ERK/mTOR signaling pathway. Mechanistically, acts as the assembly platform for STK11-AMPK interactions and promotes STK11-AMPK interactions. In turn, promotes phosphorylation of the AMPK kinase structural domain and activates AMPK, thereby positively regulating the AMPK/ERK/mTOR signaling pathway and inducing autophagy.</text>
</comment>
<comment type="function">
    <molecule>Non-structural protein 1</molecule>
    <text evidence="5">Disrupts the host endothelial glycocalyx layer of host pulmonary microvascular endothelial cells, inducing degradation of sialic acid and shedding of heparan sulfate proteoglycans. NS1 induces expression of sialidases, heparanase, and activates cathepsin L, which activates heparanase via enzymatic cleavage. These effects are probably linked to the endothelial hyperpermeability observed in severe dengue disease.</text>
</comment>
<comment type="function">
    <molecule>Non-structural protein 2A</molecule>
    <text evidence="5">Component of the viral RNA replication complex that functions in virion assembly and antagonizes the host immune response.</text>
</comment>
<comment type="function">
    <molecule>Serine protease subunit NS2B</molecule>
    <text evidence="5 14">Required cofactor for the serine protease function of NS3. May have membrane-destabilizing activity and form viroporins (By similarity).</text>
</comment>
<comment type="function">
    <molecule>Serine protease NS3</molecule>
    <text evidence="15">Displays three enzymatic activities: serine protease, NTPase and RNA helicase. NS3 serine protease, in association with NS2B, performs its autocleavage and cleaves the polyprotein at dibasic sites in the cytoplasm: C-prM, NS2A-NS2B, NS2B-NS3, NS3-NS4A, NS4A-2K and NS4B-NS5. NS3 RNA helicase binds RNA and unwinds dsRNA in the 3' to 5' direction.</text>
</comment>
<comment type="function">
    <molecule>Non-structural protein 4A</molecule>
    <text evidence="5 9 17">Regulates the ATPase activity of the NS3 helicase activity. NS4A allows NS3 helicase to conserve energy during unwinding. Plays a role in the inhibition of the host innate immune response. Interacts with host MAVS and thereby prevents the interaction between RIGI and MAVS. In turn, IFN-beta production is impaired. Interacts with host AUP1 which mediates induction of lipophagy in host cells and facilitates production of virus progeny particles (PubMed:29902443).</text>
</comment>
<comment type="function">
    <molecule>Peptide 2k</molecule>
    <text evidence="5">Functions as a signal peptide for NS4B and is required for the interferon antagonism activity of the latter.</text>
</comment>
<comment type="function">
    <molecule>Non-structural protein 4B</molecule>
    <text evidence="9">Induces the formation of ER-derived membrane vesicles where the viral replication takes place. Inhibits interferon (IFN)-induced host STAT1 phosphorylation and nuclear translocation, thereby preventing the establishment of cellular antiviral state by blocking the IFN-alpha/beta pathway.</text>
</comment>
<comment type="function">
    <molecule>RNA-directed RNA polymerase NS5</molecule>
    <text evidence="5 6">Replicates the viral (+) and (-) RNA genome, and performs the capping of genomes in the cytoplasm. NS5 methylates viral RNA cap at guanine N-7 and ribose 2'-O positions. Besides its role in RNA genome replication, also prevents the establishment of cellular antiviral state by blocking the interferon-alpha/beta (IFN-alpha/beta) signaling pathway. Inhibits host TYK2 and STAT2 phosphorylation, thereby preventing activation of JAK-STAT signaling pathway (By similarity). May reduce immune responses by preventing the recruitment of the host PAF1 complex to interferon-responsive genes (By similarity).</text>
</comment>
<comment type="catalytic activity">
    <reaction>
        <text>Selective hydrolysis of -Xaa-Xaa-|-Yaa- bonds in which each of the Xaa can be either Arg or Lys and Yaa can be either Ser or Ala.</text>
        <dbReference type="EC" id="3.4.21.91"/>
    </reaction>
</comment>
<comment type="catalytic activity">
    <reaction evidence="12">
        <text>RNA(n) + a ribonucleoside 5'-triphosphate = RNA(n+1) + diphosphate</text>
        <dbReference type="Rhea" id="RHEA:21248"/>
        <dbReference type="Rhea" id="RHEA-COMP:14527"/>
        <dbReference type="Rhea" id="RHEA-COMP:17342"/>
        <dbReference type="ChEBI" id="CHEBI:33019"/>
        <dbReference type="ChEBI" id="CHEBI:61557"/>
        <dbReference type="ChEBI" id="CHEBI:140395"/>
        <dbReference type="EC" id="2.7.7.48"/>
    </reaction>
</comment>
<comment type="catalytic activity">
    <reaction>
        <text>a ribonucleoside 5'-triphosphate + H2O = a ribonucleoside 5'-diphosphate + phosphate + H(+)</text>
        <dbReference type="Rhea" id="RHEA:23680"/>
        <dbReference type="ChEBI" id="CHEBI:15377"/>
        <dbReference type="ChEBI" id="CHEBI:15378"/>
        <dbReference type="ChEBI" id="CHEBI:43474"/>
        <dbReference type="ChEBI" id="CHEBI:57930"/>
        <dbReference type="ChEBI" id="CHEBI:61557"/>
        <dbReference type="EC" id="3.6.1.15"/>
    </reaction>
</comment>
<comment type="catalytic activity">
    <reaction>
        <text>ATP + H2O = ADP + phosphate + H(+)</text>
        <dbReference type="Rhea" id="RHEA:13065"/>
        <dbReference type="ChEBI" id="CHEBI:15377"/>
        <dbReference type="ChEBI" id="CHEBI:15378"/>
        <dbReference type="ChEBI" id="CHEBI:30616"/>
        <dbReference type="ChEBI" id="CHEBI:43474"/>
        <dbReference type="ChEBI" id="CHEBI:456216"/>
        <dbReference type="EC" id="3.6.4.13"/>
    </reaction>
</comment>
<comment type="catalytic activity">
    <reaction evidence="16">
        <text>a 5'-end (5'-triphosphoguanosine)-ribonucleoside in mRNA + S-adenosyl-L-methionine = a 5'-end (N(7)-methyl 5'-triphosphoguanosine)-ribonucleoside in mRNA + S-adenosyl-L-homocysteine</text>
        <dbReference type="Rhea" id="RHEA:67008"/>
        <dbReference type="Rhea" id="RHEA-COMP:17166"/>
        <dbReference type="Rhea" id="RHEA-COMP:17167"/>
        <dbReference type="ChEBI" id="CHEBI:57856"/>
        <dbReference type="ChEBI" id="CHEBI:59789"/>
        <dbReference type="ChEBI" id="CHEBI:156461"/>
        <dbReference type="ChEBI" id="CHEBI:167617"/>
        <dbReference type="EC" id="2.1.1.56"/>
    </reaction>
</comment>
<comment type="catalytic activity">
    <reaction evidence="16">
        <text>a 5'-end (N(7)-methyl 5'-triphosphoguanosine)-ribonucleoside in mRNA + S-adenosyl-L-methionine = a 5'-end (N(7)-methyl 5'-triphosphoguanosine)-(2'-O-methyl-ribonucleoside) in mRNA + S-adenosyl-L-homocysteine + H(+)</text>
        <dbReference type="Rhea" id="RHEA:67020"/>
        <dbReference type="Rhea" id="RHEA-COMP:17167"/>
        <dbReference type="Rhea" id="RHEA-COMP:17168"/>
        <dbReference type="ChEBI" id="CHEBI:15378"/>
        <dbReference type="ChEBI" id="CHEBI:57856"/>
        <dbReference type="ChEBI" id="CHEBI:59789"/>
        <dbReference type="ChEBI" id="CHEBI:156461"/>
        <dbReference type="ChEBI" id="CHEBI:167609"/>
        <dbReference type="EC" id="2.1.1.57"/>
    </reaction>
</comment>
<comment type="subunit">
    <molecule>Capsid protein C</molecule>
    <text evidence="5">Homodimer. Interacts (via N-terminus) with host EXOC1 (via C-terminus); this interaction results in EXOC1 degradation through the proteasome degradation pathway.</text>
</comment>
<comment type="subunit">
    <molecule>Protein prM</molecule>
    <text evidence="5">Forms heterodimers with envelope protein E in the endoplasmic reticulum and Golgi.</text>
</comment>
<comment type="subunit">
    <molecule>Envelope protein E</molecule>
    <text evidence="5">Homodimer; in the endoplasmic reticulum and Golgi. Interacts with protein prM. Interacts with non-structural protein 1.</text>
</comment>
<comment type="subunit">
    <molecule>Non-structural protein 1</molecule>
    <text evidence="5 6">Homodimer; Homohexamer when secreted. Interacts with envelope protein E (By similarity). Interacts with host PRKAA1 (By similarity).</text>
</comment>
<comment type="subunit">
    <molecule>Non-structural protein 2A</molecule>
    <text evidence="5">Interacts (via N-terminus) with serine protease NS3.</text>
</comment>
<comment type="subunit">
    <molecule>Serine protease subunit NS2B</molecule>
    <text evidence="5">Forms a heterodimer with serine protease NS3. May form homooligomers.</text>
</comment>
<comment type="subunit">
    <molecule>Serine protease NS3</molecule>
    <text evidence="5">Forms a heterodimer with NS2B. Interacts with NS4B. Interacts with unphosphorylated RNA-directed RNA polymerase NS5; this interaction stimulates RNA-directed RNA polymerase NS5 guanylyltransferase activity. Interacts with host SHFL.</text>
</comment>
<comment type="subunit">
    <molecule>Non-structural protein 4A</molecule>
    <text evidence="5 6 17">Interacts with host MAVS; this interaction inhibits the synthesis of IFN-beta. Interacts with host SHFL (By similarity). Interacts with host AUP1; the interaction occurs in the presence of Dengue virus NS4B and induces lipophagy which facilitates production of virus progeny particles (PubMed:29902443). May interact with host SRPRA and SEC61G (By similarity).</text>
</comment>
<comment type="subunit">
    <molecule>Non-structural protein 4B</molecule>
    <text evidence="5">Interacts with serine protease NS3.</text>
</comment>
<comment type="subunit">
    <molecule>RNA-directed RNA polymerase NS5</molecule>
    <text evidence="5 6">Homodimer. Interacts with host STAT2; this interaction inhibits the phosphorylation of the latter, and, when all viral proteins are present (polyprotein), targets STAT2 for degradation. Interacts with serine protease NS3 (By similarity). Interacts with host PAF1 complex; the interaction may prevent the recruitment of the PAF1 complex to interferon-responsive genes, and thus reduces the immune response (By similarity).</text>
</comment>
<comment type="interaction">
    <interactant intactId="EBI-8826689">
        <id>PRO_0000037940</id>
    </interactant>
    <interactant intactId="EBI-350540">
        <id>P26599</id>
        <label>PTBP1</label>
    </interactant>
    <organismsDiffer>true</organismsDiffer>
    <experiments>5</experiments>
</comment>
<comment type="interaction">
    <interactant intactId="EBI-9118921">
        <id>PRO_0000037943</id>
    </interactant>
    <interactant intactId="EBI-1171113">
        <id>Q14677</id>
        <label>CLINT1</label>
    </interactant>
    <organismsDiffer>true</organismsDiffer>
    <experiments>2</experiments>
</comment>
<comment type="interaction">
    <interactant intactId="EBI-8826488">
        <id>PRO_0000037946</id>
    </interactant>
    <interactant intactId="EBI-3926040">
        <id>P04114</id>
        <label>APOB</label>
    </interactant>
    <organismsDiffer>true</organismsDiffer>
    <experiments>3</experiments>
</comment>
<comment type="interaction">
    <interactant intactId="EBI-8826488">
        <id>PRO_0000037946</id>
    </interactant>
    <interactant intactId="EBI-1050386">
        <id>P61201</id>
        <label>COPS2</label>
    </interactant>
    <organismsDiffer>true</organismsDiffer>
    <experiments>3</experiments>
</comment>
<comment type="interaction">
    <interactant intactId="EBI-8826488">
        <id>PRO_0000037946</id>
    </interactant>
    <interactant intactId="EBI-2654610">
        <id>Q92564</id>
        <label>DCUN1D4</label>
    </interactant>
    <organismsDiffer>true</organismsDiffer>
    <experiments>3</experiments>
</comment>
<comment type="interaction">
    <interactant intactId="EBI-8826488">
        <id>PRO_0000037946</id>
    </interactant>
    <interactant intactId="EBI-310758">
        <id>Q03001</id>
        <label>DST</label>
    </interactant>
    <organismsDiffer>true</organismsDiffer>
    <experiments>4</experiments>
</comment>
<comment type="interaction">
    <interactant intactId="EBI-8826488">
        <id>PRO_0000037946</id>
    </interactant>
    <interactant intactId="EBI-618309">
        <id>Q08379</id>
        <label>GOLGA2</label>
    </interactant>
    <organismsDiffer>true</organismsDiffer>
    <experiments>3</experiments>
</comment>
<comment type="interaction">
    <interactant intactId="EBI-8826488">
        <id>PRO_0000037946</id>
    </interactant>
    <interactant intactId="EBI-629434">
        <id>O75925</id>
        <label>PIAS1</label>
    </interactant>
    <organismsDiffer>true</organismsDiffer>
    <experiments>3</experiments>
</comment>
<comment type="interaction">
    <interactant intactId="EBI-8826488">
        <id>PRO_0000037946</id>
    </interactant>
    <interactant intactId="EBI-80168">
        <id>P63279</id>
        <label>UBE2I</label>
    </interactant>
    <organismsDiffer>true</organismsDiffer>
    <experiments>3</experiments>
</comment>
<comment type="interaction">
    <interactant intactId="EBI-8826747">
        <id>PRO_0000308465</id>
    </interactant>
    <interactant intactId="EBI-357530">
        <id>Q9ULX6</id>
        <label>AKAP8L</label>
    </interactant>
    <organismsDiffer>true</organismsDiffer>
    <experiments>3</experiments>
</comment>
<comment type="interaction">
    <interactant intactId="EBI-8826747">
        <id>PRO_0000308465</id>
    </interactant>
    <interactant intactId="EBI-5653671">
        <id>Q9ULJ7</id>
        <label>ANKRD50</label>
    </interactant>
    <organismsDiffer>true</organismsDiffer>
    <experiments>4</experiments>
</comment>
<comment type="interaction">
    <interactant intactId="EBI-8826747">
        <id>PRO_0000308465</id>
    </interactant>
    <interactant intactId="EBI-5463183">
        <id>A8MPP1</id>
        <label>DDX11L8</label>
    </interactant>
    <organismsDiffer>true</organismsDiffer>
    <experiments>3</experiments>
</comment>
<comment type="interaction">
    <interactant intactId="EBI-8826747">
        <id>PRO_0000308465</id>
    </interactant>
    <interactant intactId="EBI-351962">
        <id>P17844</id>
        <label>DDX5</label>
    </interactant>
    <organismsDiffer>true</organismsDiffer>
    <experiments>3</experiments>
</comment>
<comment type="interaction">
    <interactant intactId="EBI-8826747">
        <id>PRO_0000308465</id>
    </interactant>
    <interactant intactId="EBI-296519">
        <id>P78344</id>
        <label>EIF4G2</label>
    </interactant>
    <organismsDiffer>true</organismsDiffer>
    <experiments>4</experiments>
</comment>
<comment type="interaction">
    <interactant intactId="EBI-8826747">
        <id>PRO_0000308465</id>
    </interactant>
    <interactant intactId="EBI-8827490">
        <id>A6NCC3</id>
        <label>GOLGA8O</label>
    </interactant>
    <organismsDiffer>true</organismsDiffer>
    <experiments>3</experiments>
</comment>
<comment type="interaction">
    <interactant intactId="EBI-8826747">
        <id>PRO_0000308465</id>
    </interactant>
    <interactant intactId="EBI-310624">
        <id>Q8WUM4</id>
        <label>PDCD6IP</label>
    </interactant>
    <organismsDiffer>true</organismsDiffer>
    <experiments>3</experiments>
</comment>
<comment type="interaction">
    <interactant intactId="EBI-8826747">
        <id>PRO_0000308465</id>
    </interactant>
    <interactant intactId="EBI-2255129">
        <id>P30041</id>
        <label>PRDX6</label>
    </interactant>
    <organismsDiffer>true</organismsDiffer>
    <experiments>3</experiments>
</comment>
<comment type="interaction">
    <interactant intactId="EBI-8826747">
        <id>PRO_0000308465</id>
    </interactant>
    <interactant intactId="EBI-350540">
        <id>P26599</id>
        <label>PTBP1</label>
    </interactant>
    <organismsDiffer>true</organismsDiffer>
    <experiments>3</experiments>
</comment>
<comment type="subcellular location">
    <molecule>Capsid protein C</molecule>
    <subcellularLocation>
        <location evidence="5">Virion</location>
    </subcellularLocation>
    <subcellularLocation>
        <location evidence="5">Host nucleus</location>
    </subcellularLocation>
    <subcellularLocation>
        <location evidence="5">Host cytoplasm</location>
    </subcellularLocation>
    <subcellularLocation>
        <location evidence="5">Host cytoplasm</location>
        <location evidence="5">Host perinuclear region</location>
    </subcellularLocation>
</comment>
<comment type="subcellular location">
    <molecule>Peptide pr</molecule>
    <subcellularLocation>
        <location evidence="5">Secreted</location>
    </subcellularLocation>
</comment>
<comment type="subcellular location">
    <molecule>Small envelope protein M</molecule>
    <subcellularLocation>
        <location evidence="5">Virion membrane</location>
        <topology evidence="10">Multi-pass membrane protein</topology>
    </subcellularLocation>
    <subcellularLocation>
        <location evidence="5">Host endoplasmic reticulum membrane</location>
        <topology evidence="10">Multi-pass membrane protein</topology>
    </subcellularLocation>
</comment>
<comment type="subcellular location">
    <molecule>Envelope protein E</molecule>
    <subcellularLocation>
        <location evidence="5">Virion membrane</location>
        <topology evidence="10">Multi-pass membrane protein</topology>
    </subcellularLocation>
    <subcellularLocation>
        <location evidence="5">Host endoplasmic reticulum membrane</location>
        <topology evidence="10">Multi-pass membrane protein</topology>
    </subcellularLocation>
</comment>
<comment type="subcellular location">
    <molecule>Non-structural protein 1</molecule>
    <subcellularLocation>
        <location evidence="5">Secreted</location>
    </subcellularLocation>
    <subcellularLocation>
        <location evidence="6">Host cytoplasm</location>
    </subcellularLocation>
    <subcellularLocation>
        <location>Host endoplasmic reticulum membrane</location>
        <topology>Peripheral membrane protein</topology>
        <orientation evidence="5">Lumenal side</orientation>
    </subcellularLocation>
    <text evidence="9">Located in RE-derived vesicles hosting the replication complex.</text>
</comment>
<comment type="subcellular location">
    <molecule>Non-structural protein 2A</molecule>
    <subcellularLocation>
        <location evidence="5">Host endoplasmic reticulum membrane</location>
        <topology evidence="5">Multi-pass membrane protein</topology>
    </subcellularLocation>
</comment>
<comment type="subcellular location">
    <molecule>Serine protease subunit NS2B</molecule>
    <subcellularLocation>
        <location>Host endoplasmic reticulum membrane</location>
        <topology evidence="5">Multi-pass membrane protein</topology>
    </subcellularLocation>
</comment>
<comment type="subcellular location">
    <molecule>Serine protease NS3</molecule>
    <subcellularLocation>
        <location evidence="15">Host endoplasmic reticulum membrane</location>
        <topology evidence="15">Peripheral membrane protein</topology>
        <orientation evidence="15">Cytoplasmic side</orientation>
    </subcellularLocation>
    <text evidence="15">Remains non-covalently associated to serine protease subunit NS2B.</text>
</comment>
<comment type="subcellular location">
    <molecule>Non-structural protein 4A</molecule>
    <subcellularLocation>
        <location evidence="5">Host endoplasmic reticulum membrane</location>
        <topology evidence="5">Multi-pass membrane protein</topology>
    </subcellularLocation>
    <subcellularLocation>
        <location evidence="5">Host mitochondrion</location>
    </subcellularLocation>
    <text evidence="5">Located in RE-associated vesicles hosting the replication complex. Interacts with host MAVS in the mitochondrion-associated endoplasmic reticulum membranes.</text>
</comment>
<comment type="subcellular location">
    <molecule>Non-structural protein 4B</molecule>
    <subcellularLocation>
        <location evidence="5">Host endoplasmic reticulum membrane</location>
        <topology evidence="5">Multi-pass membrane protein</topology>
    </subcellularLocation>
    <text evidence="9">Located in RE-derived vesicles hosting the replication complex.</text>
</comment>
<comment type="subcellular location">
    <molecule>RNA-directed RNA polymerase NS5</molecule>
    <subcellularLocation>
        <location>Host endoplasmic reticulum membrane</location>
        <topology>Peripheral membrane protein</topology>
        <orientation>Cytoplasmic side</orientation>
    </subcellularLocation>
    <subcellularLocation>
        <location evidence="5">Host nucleus</location>
    </subcellularLocation>
    <text evidence="5">Located in RE-associated vesicles hosting the replication complex. NS5 protein is mainly localized in the nucleus rather than in ER vesicles, especially in the DENV 2, 3, 4 serotypes.</text>
</comment>
<comment type="domain">
    <text evidence="5">The transmembrane domains of the small envelope protein M and envelope protein E contain an endoplasmic reticulum retention signal.</text>
</comment>
<comment type="PTM">
    <molecule>Genome polyprotein</molecule>
    <text evidence="5">Specific enzymatic cleavages in vivo yield mature proteins. Cleavages in the lumen of endoplasmic reticulum are performed by host signal peptidase, whereas cleavages in the cytoplasmic side are performed by serine protease NS3. Signal cleavage at the 2K-4B site requires a prior NS3 protease-mediated cleavage at the 4A-2K site.</text>
</comment>
<comment type="PTM">
    <molecule>Protein prM</molecule>
    <text evidence="5">Cleaved in post-Golgi vesicles by a host furin, releasing the mature small envelope protein M, and peptide pr. This cleavage is incomplete as up to 30% of viral particles still carry uncleaved prM.</text>
</comment>
<comment type="PTM">
    <molecule>Envelope protein E</molecule>
    <text evidence="5">N-glycosylated.</text>
</comment>
<comment type="PTM">
    <molecule>Non-structural protein 1</molecule>
    <text evidence="5">N-glycosylated. The excreted form is glycosylated and this is required for efficient secretion of the protein from infected cells.</text>
</comment>
<comment type="PTM">
    <molecule>Serine protease NS3</molecule>
    <text evidence="7">Acetylated by host KAT5. Acetylation modulates NS3 RNA-binding and unwinding activities and plays an important positive role for viral replication.</text>
</comment>
<comment type="PTM">
    <molecule>RNA-directed RNA polymerase NS5</molecule>
    <text evidence="6">Sumoylation of RNA-directed RNA polymerase NS5 increases NS5 protein stability allowing proper viral RNA replication.</text>
</comment>
<comment type="PTM">
    <molecule>RNA-directed RNA polymerase NS5</molecule>
    <text evidence="5">Phosphorylated on serines residues. This phosphorylation may trigger NS5 nuclear localization.</text>
</comment>
<comment type="similarity">
    <text evidence="16">In the N-terminal section; belongs to the class I-like SAM-binding methyltransferase superfamily. mRNA cap 0-1 NS5-type methyltransferase family.</text>
</comment>